<organism>
    <name type="scientific">Homo sapiens</name>
    <name type="common">Human</name>
    <dbReference type="NCBI Taxonomy" id="9606"/>
    <lineage>
        <taxon>Eukaryota</taxon>
        <taxon>Metazoa</taxon>
        <taxon>Chordata</taxon>
        <taxon>Craniata</taxon>
        <taxon>Vertebrata</taxon>
        <taxon>Euteleostomi</taxon>
        <taxon>Mammalia</taxon>
        <taxon>Eutheria</taxon>
        <taxon>Euarchontoglires</taxon>
        <taxon>Primates</taxon>
        <taxon>Haplorrhini</taxon>
        <taxon>Catarrhini</taxon>
        <taxon>Hominidae</taxon>
        <taxon>Homo</taxon>
    </lineage>
</organism>
<gene>
    <name type="primary">CALCOCO2</name>
    <name evidence="23" type="synonym">NDP52</name>
</gene>
<evidence type="ECO:0000255" key="1"/>
<evidence type="ECO:0000255" key="2">
    <source>
        <dbReference type="PROSITE-ProRule" id="PRU01253"/>
    </source>
</evidence>
<evidence type="ECO:0000256" key="3">
    <source>
        <dbReference type="SAM" id="MobiDB-lite"/>
    </source>
</evidence>
<evidence type="ECO:0000269" key="4">
    <source>
    </source>
</evidence>
<evidence type="ECO:0000269" key="5">
    <source>
    </source>
</evidence>
<evidence type="ECO:0000269" key="6">
    <source>
    </source>
</evidence>
<evidence type="ECO:0000269" key="7">
    <source>
    </source>
</evidence>
<evidence type="ECO:0000269" key="8">
    <source>
    </source>
</evidence>
<evidence type="ECO:0000269" key="9">
    <source>
    </source>
</evidence>
<evidence type="ECO:0000269" key="10">
    <source>
    </source>
</evidence>
<evidence type="ECO:0000269" key="11">
    <source>
    </source>
</evidence>
<evidence type="ECO:0000269" key="12">
    <source>
    </source>
</evidence>
<evidence type="ECO:0000269" key="13">
    <source>
    </source>
</evidence>
<evidence type="ECO:0000269" key="14">
    <source>
    </source>
</evidence>
<evidence type="ECO:0000269" key="15">
    <source>
    </source>
</evidence>
<evidence type="ECO:0000269" key="16">
    <source>
    </source>
</evidence>
<evidence type="ECO:0000269" key="17">
    <source>
    </source>
</evidence>
<evidence type="ECO:0000269" key="18">
    <source>
    </source>
</evidence>
<evidence type="ECO:0000269" key="19">
    <source ref="3"/>
</evidence>
<evidence type="ECO:0000269" key="20">
    <source ref="4"/>
</evidence>
<evidence type="ECO:0000269" key="21">
    <source ref="6"/>
</evidence>
<evidence type="ECO:0000303" key="22">
    <source>
    </source>
</evidence>
<evidence type="ECO:0000303" key="23">
    <source>
    </source>
</evidence>
<evidence type="ECO:0000303" key="24">
    <source>
    </source>
</evidence>
<evidence type="ECO:0000305" key="25"/>
<evidence type="ECO:0000305" key="26">
    <source>
    </source>
</evidence>
<evidence type="ECO:0000305" key="27">
    <source>
    </source>
</evidence>
<evidence type="ECO:0007744" key="28">
    <source>
        <dbReference type="PDB" id="5Z7A"/>
    </source>
</evidence>
<evidence type="ECO:0007744" key="29">
    <source>
        <dbReference type="PDB" id="5Z7L"/>
    </source>
</evidence>
<evidence type="ECO:0007744" key="30">
    <source>
    </source>
</evidence>
<evidence type="ECO:0007829" key="31">
    <source>
        <dbReference type="PDB" id="2MXP"/>
    </source>
</evidence>
<evidence type="ECO:0007829" key="32">
    <source>
        <dbReference type="PDB" id="3VVV"/>
    </source>
</evidence>
<evidence type="ECO:0007829" key="33">
    <source>
        <dbReference type="PDB" id="3VVW"/>
    </source>
</evidence>
<evidence type="ECO:0007829" key="34">
    <source>
        <dbReference type="PDB" id="4XKL"/>
    </source>
</evidence>
<evidence type="ECO:0007829" key="35">
    <source>
        <dbReference type="PDB" id="5AAQ"/>
    </source>
</evidence>
<evidence type="ECO:0007829" key="36">
    <source>
        <dbReference type="PDB" id="5Z7L"/>
    </source>
</evidence>
<evidence type="ECO:0007829" key="37">
    <source>
        <dbReference type="PDB" id="7EAA"/>
    </source>
</evidence>
<keyword id="KW-0002">3D-structure</keyword>
<keyword id="KW-0025">Alternative splicing</keyword>
<keyword id="KW-0072">Autophagy</keyword>
<keyword id="KW-0175">Coiled coil</keyword>
<keyword id="KW-0963">Cytoplasm</keyword>
<keyword id="KW-0968">Cytoplasmic vesicle</keyword>
<keyword id="KW-0206">Cytoskeleton</keyword>
<keyword id="KW-0945">Host-virus interaction</keyword>
<keyword id="KW-0472">Membrane</keyword>
<keyword id="KW-0479">Metal-binding</keyword>
<keyword id="KW-0597">Phosphoprotein</keyword>
<keyword id="KW-1267">Proteomics identification</keyword>
<keyword id="KW-1185">Reference proteome</keyword>
<keyword id="KW-0862">Zinc</keyword>
<keyword id="KW-0863">Zinc-finger</keyword>
<protein>
    <recommendedName>
        <fullName>Calcium-binding and coiled-coil domain-containing protein 2</fullName>
    </recommendedName>
    <alternativeName>
        <fullName>Antigen nuclear dot 52 kDa protein</fullName>
    </alternativeName>
    <alternativeName>
        <fullName evidence="25">Nuclear domain 10 protein NDP52</fullName>
        <shortName evidence="23">Nuclear domain 10 protein 52</shortName>
    </alternativeName>
    <alternativeName>
        <fullName evidence="24">Nuclear dot protein 52</fullName>
    </alternativeName>
</protein>
<proteinExistence type="evidence at protein level"/>
<name>CACO2_HUMAN</name>
<dbReference type="EMBL" id="U22897">
    <property type="protein sequence ID" value="AAA75297.1"/>
    <property type="molecule type" value="mRNA"/>
</dbReference>
<dbReference type="EMBL" id="AK293137">
    <property type="protein sequence ID" value="BAG56685.1"/>
    <property type="molecule type" value="mRNA"/>
</dbReference>
<dbReference type="EMBL" id="AK293329">
    <property type="protein sequence ID" value="BAG56845.1"/>
    <property type="molecule type" value="mRNA"/>
</dbReference>
<dbReference type="EMBL" id="AK298177">
    <property type="protein sequence ID" value="BAG60448.1"/>
    <property type="molecule type" value="mRNA"/>
</dbReference>
<dbReference type="EMBL" id="AK303313">
    <property type="protein sequence ID" value="BAG64382.1"/>
    <property type="molecule type" value="mRNA"/>
</dbReference>
<dbReference type="EMBL" id="AK314796">
    <property type="protein sequence ID" value="BAG37327.1"/>
    <property type="molecule type" value="mRNA"/>
</dbReference>
<dbReference type="EMBL" id="CR456763">
    <property type="protein sequence ID" value="CAG33044.1"/>
    <property type="molecule type" value="mRNA"/>
</dbReference>
<dbReference type="EMBL" id="AK222666">
    <property type="protein sequence ID" value="BAD96386.1"/>
    <property type="molecule type" value="mRNA"/>
</dbReference>
<dbReference type="EMBL" id="AK223227">
    <property type="protein sequence ID" value="BAD96947.1"/>
    <property type="molecule type" value="mRNA"/>
</dbReference>
<dbReference type="EMBL" id="AC068531">
    <property type="status" value="NOT_ANNOTATED_CDS"/>
    <property type="molecule type" value="Genomic_DNA"/>
</dbReference>
<dbReference type="EMBL" id="CH471109">
    <property type="protein sequence ID" value="EAW94707.1"/>
    <property type="molecule type" value="Genomic_DNA"/>
</dbReference>
<dbReference type="EMBL" id="BC004130">
    <property type="protein sequence ID" value="AAH04130.1"/>
    <property type="molecule type" value="mRNA"/>
</dbReference>
<dbReference type="EMBL" id="BC015893">
    <property type="protein sequence ID" value="AAH15893.1"/>
    <property type="molecule type" value="mRNA"/>
</dbReference>
<dbReference type="CCDS" id="CCDS11538.1">
    <molecule id="Q13137-1"/>
</dbReference>
<dbReference type="CCDS" id="CCDS58558.1">
    <molecule id="Q13137-3"/>
</dbReference>
<dbReference type="CCDS" id="CCDS58559.1">
    <molecule id="Q13137-4"/>
</dbReference>
<dbReference type="CCDS" id="CCDS58560.1">
    <molecule id="Q13137-2"/>
</dbReference>
<dbReference type="CCDS" id="CCDS58561.1">
    <molecule id="Q13137-5"/>
</dbReference>
<dbReference type="PIR" id="A56733">
    <property type="entry name" value="A56733"/>
</dbReference>
<dbReference type="RefSeq" id="NP_001248319.1">
    <molecule id="Q13137-4"/>
    <property type="nucleotide sequence ID" value="NM_001261390.2"/>
</dbReference>
<dbReference type="RefSeq" id="NP_001248320.1">
    <molecule id="Q13137-3"/>
    <property type="nucleotide sequence ID" value="NM_001261391.2"/>
</dbReference>
<dbReference type="RefSeq" id="NP_001248322.1">
    <molecule id="Q13137-2"/>
    <property type="nucleotide sequence ID" value="NM_001261393.2"/>
</dbReference>
<dbReference type="RefSeq" id="NP_001248324.1">
    <molecule id="Q13137-5"/>
    <property type="nucleotide sequence ID" value="NM_001261395.2"/>
</dbReference>
<dbReference type="RefSeq" id="NP_005822.1">
    <molecule id="Q13137-1"/>
    <property type="nucleotide sequence ID" value="NM_005831.5"/>
</dbReference>
<dbReference type="RefSeq" id="XP_047291055.1">
    <molecule id="Q13137-5"/>
    <property type="nucleotide sequence ID" value="XM_047435099.1"/>
</dbReference>
<dbReference type="RefSeq" id="XP_047291056.1">
    <molecule id="Q13137-5"/>
    <property type="nucleotide sequence ID" value="XM_047435100.1"/>
</dbReference>
<dbReference type="RefSeq" id="XP_054170647.1">
    <molecule id="Q13137-5"/>
    <property type="nucleotide sequence ID" value="XM_054314672.1"/>
</dbReference>
<dbReference type="RefSeq" id="XP_054170648.1">
    <molecule id="Q13137-5"/>
    <property type="nucleotide sequence ID" value="XM_054314673.1"/>
</dbReference>
<dbReference type="PDB" id="2MXP">
    <property type="method" value="NMR"/>
    <property type="chains" value="A=414-446"/>
</dbReference>
<dbReference type="PDB" id="3VVV">
    <property type="method" value="X-ray"/>
    <property type="resolution" value="1.35 A"/>
    <property type="chains" value="A=21-141"/>
</dbReference>
<dbReference type="PDB" id="3VVW">
    <property type="method" value="X-ray"/>
    <property type="resolution" value="2.50 A"/>
    <property type="chains" value="A=21-141"/>
</dbReference>
<dbReference type="PDB" id="4GXL">
    <property type="method" value="X-ray"/>
    <property type="resolution" value="2.02 A"/>
    <property type="chains" value="B=368-381"/>
</dbReference>
<dbReference type="PDB" id="4HAN">
    <property type="method" value="X-ray"/>
    <property type="resolution" value="2.55 A"/>
    <property type="chains" value="C/D=372-385"/>
</dbReference>
<dbReference type="PDB" id="4XKL">
    <property type="method" value="X-ray"/>
    <property type="resolution" value="2.10 A"/>
    <property type="chains" value="B/D=414-446"/>
</dbReference>
<dbReference type="PDB" id="5AAQ">
    <property type="method" value="NMR"/>
    <property type="chains" value="A=388-446"/>
</dbReference>
<dbReference type="PDB" id="5Z7A">
    <property type="method" value="X-ray"/>
    <property type="resolution" value="2.38 A"/>
    <property type="chains" value="A/B=1-126"/>
</dbReference>
<dbReference type="PDB" id="5Z7L">
    <property type="method" value="X-ray"/>
    <property type="resolution" value="2.02 A"/>
    <property type="chains" value="A/B=10-126"/>
</dbReference>
<dbReference type="PDB" id="7EAA">
    <property type="method" value="X-ray"/>
    <property type="resolution" value="2.60 A"/>
    <property type="chains" value="A/B=10-141"/>
</dbReference>
<dbReference type="PDBsum" id="2MXP"/>
<dbReference type="PDBsum" id="3VVV"/>
<dbReference type="PDBsum" id="3VVW"/>
<dbReference type="PDBsum" id="4GXL"/>
<dbReference type="PDBsum" id="4HAN"/>
<dbReference type="PDBsum" id="4XKL"/>
<dbReference type="PDBsum" id="5AAQ"/>
<dbReference type="PDBsum" id="5Z7A"/>
<dbReference type="PDBsum" id="5Z7L"/>
<dbReference type="PDBsum" id="7EAA"/>
<dbReference type="BMRB" id="Q13137"/>
<dbReference type="SMR" id="Q13137"/>
<dbReference type="BioGRID" id="115535">
    <property type="interactions" value="512"/>
</dbReference>
<dbReference type="DIP" id="DIP-57534N"/>
<dbReference type="FunCoup" id="Q13137">
    <property type="interactions" value="2274"/>
</dbReference>
<dbReference type="IntAct" id="Q13137">
    <property type="interactions" value="223"/>
</dbReference>
<dbReference type="MINT" id="Q13137"/>
<dbReference type="STRING" id="9606.ENSP00000398523"/>
<dbReference type="iPTMnet" id="Q13137"/>
<dbReference type="PhosphoSitePlus" id="Q13137"/>
<dbReference type="SwissPalm" id="Q13137"/>
<dbReference type="BioMuta" id="CALCOCO2"/>
<dbReference type="DMDM" id="74735623"/>
<dbReference type="CPTAC" id="CPTAC-1312"/>
<dbReference type="jPOST" id="Q13137"/>
<dbReference type="MassIVE" id="Q13137"/>
<dbReference type="PaxDb" id="9606-ENSP00000398523"/>
<dbReference type="PeptideAtlas" id="Q13137"/>
<dbReference type="ProteomicsDB" id="17172"/>
<dbReference type="ProteomicsDB" id="18257"/>
<dbReference type="ProteomicsDB" id="19207"/>
<dbReference type="ProteomicsDB" id="4752"/>
<dbReference type="ProteomicsDB" id="59186">
    <molecule id="Q13137-1"/>
</dbReference>
<dbReference type="Pumba" id="Q13137"/>
<dbReference type="Antibodypedia" id="17875">
    <property type="antibodies" value="467 antibodies from 28 providers"/>
</dbReference>
<dbReference type="DNASU" id="10241"/>
<dbReference type="Ensembl" id="ENST00000258947.8">
    <molecule id="Q13137-1"/>
    <property type="protein sequence ID" value="ENSP00000258947.3"/>
    <property type="gene ID" value="ENSG00000136436.16"/>
</dbReference>
<dbReference type="Ensembl" id="ENST00000416445.6">
    <molecule id="Q13137-2"/>
    <property type="protein sequence ID" value="ENSP00000406974.2"/>
    <property type="gene ID" value="ENSG00000136436.16"/>
</dbReference>
<dbReference type="Ensembl" id="ENST00000448105.7">
    <molecule id="Q13137-4"/>
    <property type="protein sequence ID" value="ENSP00000398523.2"/>
    <property type="gene ID" value="ENSG00000136436.16"/>
</dbReference>
<dbReference type="Ensembl" id="ENST00000508679.5">
    <molecule id="Q13137-5"/>
    <property type="protein sequence ID" value="ENSP00000423437.1"/>
    <property type="gene ID" value="ENSG00000136436.16"/>
</dbReference>
<dbReference type="Ensembl" id="ENST00000509507.5">
    <molecule id="Q13137-3"/>
    <property type="protein sequence ID" value="ENSP00000424352.1"/>
    <property type="gene ID" value="ENSG00000136436.16"/>
</dbReference>
<dbReference type="GeneID" id="10241"/>
<dbReference type="KEGG" id="hsa:10241"/>
<dbReference type="MANE-Select" id="ENST00000258947.8">
    <property type="protein sequence ID" value="ENSP00000258947.3"/>
    <property type="RefSeq nucleotide sequence ID" value="NM_005831.5"/>
    <property type="RefSeq protein sequence ID" value="NP_005822.1"/>
</dbReference>
<dbReference type="UCSC" id="uc002iof.4">
    <molecule id="Q13137-1"/>
    <property type="organism name" value="human"/>
</dbReference>
<dbReference type="AGR" id="HGNC:29912"/>
<dbReference type="CTD" id="10241"/>
<dbReference type="DisGeNET" id="10241"/>
<dbReference type="GeneCards" id="CALCOCO2"/>
<dbReference type="HGNC" id="HGNC:29912">
    <property type="gene designation" value="CALCOCO2"/>
</dbReference>
<dbReference type="HPA" id="ENSG00000136436">
    <property type="expression patterns" value="Low tissue specificity"/>
</dbReference>
<dbReference type="MIM" id="604587">
    <property type="type" value="gene"/>
</dbReference>
<dbReference type="neXtProt" id="NX_Q13137"/>
<dbReference type="OpenTargets" id="ENSG00000136436"/>
<dbReference type="PharmGKB" id="PA143485407"/>
<dbReference type="VEuPathDB" id="HostDB:ENSG00000136436"/>
<dbReference type="eggNOG" id="ENOG502QT1M">
    <property type="taxonomic scope" value="Eukaryota"/>
</dbReference>
<dbReference type="GeneTree" id="ENSGT00950000183025"/>
<dbReference type="HOGENOM" id="CLU_021315_0_0_1"/>
<dbReference type="InParanoid" id="Q13137"/>
<dbReference type="OMA" id="PFCFRNP"/>
<dbReference type="OrthoDB" id="10015001at2759"/>
<dbReference type="PAN-GO" id="Q13137">
    <property type="GO annotations" value="4 GO annotations based on evolutionary models"/>
</dbReference>
<dbReference type="PhylomeDB" id="Q13137"/>
<dbReference type="TreeFam" id="TF329501"/>
<dbReference type="PathwayCommons" id="Q13137"/>
<dbReference type="SignaLink" id="Q13137"/>
<dbReference type="BioGRID-ORCS" id="10241">
    <property type="hits" value="15 hits in 1161 CRISPR screens"/>
</dbReference>
<dbReference type="ChiTaRS" id="CALCOCO2">
    <property type="organism name" value="human"/>
</dbReference>
<dbReference type="EvolutionaryTrace" id="Q13137"/>
<dbReference type="GeneWiki" id="CALCOCO2"/>
<dbReference type="GenomeRNAi" id="10241"/>
<dbReference type="Pharos" id="Q13137">
    <property type="development level" value="Tbio"/>
</dbReference>
<dbReference type="PRO" id="PR:Q13137"/>
<dbReference type="Proteomes" id="UP000005640">
    <property type="component" value="Chromosome 17"/>
</dbReference>
<dbReference type="RNAct" id="Q13137">
    <property type="molecule type" value="protein"/>
</dbReference>
<dbReference type="Bgee" id="ENSG00000136436">
    <property type="expression patterns" value="Expressed in calcaneal tendon and 207 other cell types or tissues"/>
</dbReference>
<dbReference type="ExpressionAtlas" id="Q13137">
    <property type="expression patterns" value="baseline and differential"/>
</dbReference>
<dbReference type="GO" id="GO:0005776">
    <property type="term" value="C:autophagosome"/>
    <property type="evidence" value="ECO:0000314"/>
    <property type="project" value="GO_Central"/>
</dbReference>
<dbReference type="GO" id="GO:0000421">
    <property type="term" value="C:autophagosome membrane"/>
    <property type="evidence" value="ECO:0007669"/>
    <property type="project" value="UniProtKB-SubCell"/>
</dbReference>
<dbReference type="GO" id="GO:0005737">
    <property type="term" value="C:cytoplasm"/>
    <property type="evidence" value="ECO:0000314"/>
    <property type="project" value="BHF-UCL"/>
</dbReference>
<dbReference type="GO" id="GO:0031410">
    <property type="term" value="C:cytoplasmic vesicle"/>
    <property type="evidence" value="ECO:0007669"/>
    <property type="project" value="UniProtKB-KW"/>
</dbReference>
<dbReference type="GO" id="GO:0005856">
    <property type="term" value="C:cytoskeleton"/>
    <property type="evidence" value="ECO:0007669"/>
    <property type="project" value="UniProtKB-SubCell"/>
</dbReference>
<dbReference type="GO" id="GO:0005829">
    <property type="term" value="C:cytosol"/>
    <property type="evidence" value="ECO:0000314"/>
    <property type="project" value="HPA"/>
</dbReference>
<dbReference type="GO" id="GO:0043231">
    <property type="term" value="C:intracellular membrane-bounded organelle"/>
    <property type="evidence" value="ECO:0000314"/>
    <property type="project" value="HPA"/>
</dbReference>
<dbReference type="GO" id="GO:0016020">
    <property type="term" value="C:membrane"/>
    <property type="evidence" value="ECO:0007005"/>
    <property type="project" value="UniProtKB"/>
</dbReference>
<dbReference type="GO" id="GO:0005634">
    <property type="term" value="C:nucleus"/>
    <property type="evidence" value="ECO:0000304"/>
    <property type="project" value="ProtInc"/>
</dbReference>
<dbReference type="GO" id="GO:0048471">
    <property type="term" value="C:perinuclear region of cytoplasm"/>
    <property type="evidence" value="ECO:0000314"/>
    <property type="project" value="BHF-UCL"/>
</dbReference>
<dbReference type="GO" id="GO:0016605">
    <property type="term" value="C:PML body"/>
    <property type="evidence" value="ECO:0000314"/>
    <property type="project" value="MGI"/>
</dbReference>
<dbReference type="GO" id="GO:0042803">
    <property type="term" value="F:protein homodimerization activity"/>
    <property type="evidence" value="ECO:0000353"/>
    <property type="project" value="BHF-UCL"/>
</dbReference>
<dbReference type="GO" id="GO:0008270">
    <property type="term" value="F:zinc ion binding"/>
    <property type="evidence" value="ECO:0007669"/>
    <property type="project" value="UniProtKB-KW"/>
</dbReference>
<dbReference type="GO" id="GO:1901098">
    <property type="term" value="P:positive regulation of autophagosome maturation"/>
    <property type="evidence" value="ECO:0000315"/>
    <property type="project" value="GO_Central"/>
</dbReference>
<dbReference type="GO" id="GO:0034341">
    <property type="term" value="P:response to type II interferon"/>
    <property type="evidence" value="ECO:0000314"/>
    <property type="project" value="BHF-UCL"/>
</dbReference>
<dbReference type="GO" id="GO:0016032">
    <property type="term" value="P:viral process"/>
    <property type="evidence" value="ECO:0000304"/>
    <property type="project" value="ProtInc"/>
</dbReference>
<dbReference type="GO" id="GO:0098792">
    <property type="term" value="P:xenophagy"/>
    <property type="evidence" value="ECO:0000315"/>
    <property type="project" value="GO_Central"/>
</dbReference>
<dbReference type="CDD" id="cd21968">
    <property type="entry name" value="Zn-C2H2_CALCOCO2"/>
    <property type="match status" value="1"/>
</dbReference>
<dbReference type="FunFam" id="2.60.40.2840:FF:000002">
    <property type="entry name" value="Tax1-binding protein 1 isoform 2"/>
    <property type="match status" value="1"/>
</dbReference>
<dbReference type="Gene3D" id="2.60.40.2840">
    <property type="match status" value="1"/>
</dbReference>
<dbReference type="Gene3D" id="6.20.250.40">
    <property type="match status" value="1"/>
</dbReference>
<dbReference type="InterPro" id="IPR041641">
    <property type="entry name" value="CALCOCO1/2_Zn_UBZ1"/>
</dbReference>
<dbReference type="InterPro" id="IPR041611">
    <property type="entry name" value="SKICH"/>
</dbReference>
<dbReference type="InterPro" id="IPR051002">
    <property type="entry name" value="UBA_autophagy_assoc_protein"/>
</dbReference>
<dbReference type="PANTHER" id="PTHR31915:SF4">
    <property type="entry name" value="CALCIUM-BINDING AND COILED-COIL DOMAIN-CONTAINING PROTEIN 2"/>
    <property type="match status" value="1"/>
</dbReference>
<dbReference type="PANTHER" id="PTHR31915">
    <property type="entry name" value="SKICH DOMAIN-CONTAINING PROTEIN"/>
    <property type="match status" value="1"/>
</dbReference>
<dbReference type="Pfam" id="PF17751">
    <property type="entry name" value="SKICH"/>
    <property type="match status" value="1"/>
</dbReference>
<dbReference type="PROSITE" id="PS51905">
    <property type="entry name" value="ZF_UBZ1"/>
    <property type="match status" value="1"/>
</dbReference>
<feature type="chain" id="PRO_0000312337" description="Calcium-binding and coiled-coil domain-containing protein 2">
    <location>
        <begin position="1"/>
        <end position="446"/>
    </location>
</feature>
<feature type="zinc finger region" description="UBZ1-type" evidence="2">
    <location>
        <begin position="419"/>
        <end position="444"/>
    </location>
</feature>
<feature type="region of interest" description="Disordered" evidence="3">
    <location>
        <begin position="362"/>
        <end position="390"/>
    </location>
</feature>
<feature type="region of interest" description="Interaction with LGALS8" evidence="10 11">
    <location>
        <begin position="371"/>
        <end position="381"/>
    </location>
</feature>
<feature type="region of interest" description="Interaction with MYO6" evidence="7">
    <location>
        <begin position="395"/>
        <end position="446"/>
    </location>
</feature>
<feature type="coiled-coil region" evidence="1">
    <location>
        <begin position="137"/>
        <end position="349"/>
    </location>
</feature>
<feature type="short sequence motif" description="CLIR" evidence="26 27">
    <location>
        <begin position="133"/>
        <end position="136"/>
    </location>
</feature>
<feature type="short sequence motif" description="LIR-like" evidence="27">
    <location>
        <begin position="203"/>
        <end position="206"/>
    </location>
</feature>
<feature type="compositionally biased region" description="Polar residues" evidence="3">
    <location>
        <begin position="381"/>
        <end position="390"/>
    </location>
</feature>
<feature type="binding site" evidence="2">
    <location>
        <position position="422"/>
    </location>
    <ligand>
        <name>Zn(2+)</name>
        <dbReference type="ChEBI" id="CHEBI:29105"/>
    </ligand>
</feature>
<feature type="binding site" evidence="2">
    <location>
        <position position="425"/>
    </location>
    <ligand>
        <name>Zn(2+)</name>
        <dbReference type="ChEBI" id="CHEBI:29105"/>
    </ligand>
</feature>
<feature type="binding site" evidence="2">
    <location>
        <position position="440"/>
    </location>
    <ligand>
        <name>Zn(2+)</name>
        <dbReference type="ChEBI" id="CHEBI:29105"/>
    </ligand>
</feature>
<feature type="binding site" evidence="2">
    <location>
        <position position="444"/>
    </location>
    <ligand>
        <name>Zn(2+)</name>
        <dbReference type="ChEBI" id="CHEBI:29105"/>
    </ligand>
</feature>
<feature type="modified residue" description="Phosphoserine" evidence="30">
    <location>
        <position position="445"/>
    </location>
</feature>
<feature type="splice variant" id="VSP_047414" description="In isoform 5." evidence="22">
    <location>
        <begin position="1"/>
        <end position="72"/>
    </location>
</feature>
<feature type="splice variant" id="VSP_046766" description="In isoform 3." evidence="22">
    <original>R</original>
    <variation>RCSLNQTIQLLITPDTGSIWHQ</variation>
    <location>
        <position position="60"/>
    </location>
</feature>
<feature type="splice variant" id="VSP_046767" description="In isoform 4." evidence="22">
    <original>R</original>
    <variation>RAFKCFQDKLEQELLKWRSQGQKLQ</variation>
    <location>
        <position position="60"/>
    </location>
</feature>
<feature type="splice variant" id="VSP_044728" description="In isoform 2." evidence="22">
    <location>
        <begin position="139"/>
        <end position="180"/>
    </location>
</feature>
<feature type="sequence variant" id="VAR_037489" description="In dbSNP:rs550510." evidence="5">
    <original>G</original>
    <variation>E</variation>
    <location>
        <position position="140"/>
    </location>
</feature>
<feature type="sequence variant" id="VAR_037490" description="In dbSNP:rs2303016.">
    <original>G</original>
    <variation>R</variation>
    <location>
        <position position="227"/>
    </location>
</feature>
<feature type="sequence variant" id="VAR_037491" description="In dbSNP:rs2303015." evidence="5 19">
    <original>V</original>
    <variation>A</variation>
    <location>
        <position position="248"/>
    </location>
</feature>
<feature type="sequence variant" id="VAR_037492" description="In dbSNP:rs17849804." evidence="6">
    <original>T</original>
    <variation>A</variation>
    <location>
        <position position="273"/>
    </location>
</feature>
<feature type="sequence variant" id="VAR_037493" description="In dbSNP:rs10278." evidence="5 20 21">
    <original>P</original>
    <variation>A</variation>
    <location>
        <position position="389"/>
    </location>
</feature>
<feature type="mutagenesis site" description="Abrogates the interaction with MAP1LC3C." evidence="9">
    <original>V</original>
    <variation>S</variation>
    <location>
        <position position="136"/>
    </location>
</feature>
<feature type="mutagenesis site" description="Abrogates interaction with MAPLC3A, MAPLC3B and GABARAPL2." evidence="13">
    <original>DYWE</original>
    <variation>AAAA</variation>
    <location>
        <begin position="203"/>
        <end position="206"/>
    </location>
</feature>
<feature type="mutagenesis site" description="Severely reduces affinity for LGALS8." evidence="10 11">
    <original>L</original>
    <variation>A</variation>
    <location>
        <position position="374"/>
    </location>
</feature>
<feature type="mutagenesis site" description="Severely reduces affinity for LGALS8." evidence="10">
    <original>Y</original>
    <variation>A</variation>
    <location>
        <position position="376"/>
    </location>
</feature>
<feature type="mutagenesis site" description="Prevents interaction with LGALS8." evidence="10">
    <original>N</original>
    <variation>A</variation>
    <location>
        <position position="378"/>
    </location>
</feature>
<feature type="mutagenesis site" description="Severely reduced affinity for LGALS8." evidence="10 11">
    <original>Y</original>
    <variation>A</variation>
    <variation>F</variation>
    <location>
        <position position="380"/>
    </location>
</feature>
<feature type="mutagenesis site" description="Does not affect interaction with MYO6." evidence="7">
    <original>C</original>
    <variation>A</variation>
    <location>
        <position position="400"/>
    </location>
</feature>
<feature type="mutagenesis site" description="Fails interact with MYO6 and to promote maturation of autophagosomes." evidence="7 13">
    <original>C</original>
    <variation>A</variation>
    <location>
        <position position="425"/>
    </location>
</feature>
<feature type="sequence conflict" description="In Ref. 2; BAG64382." evidence="25" ref="2">
    <original>D</original>
    <variation>Y</variation>
    <location>
        <position position="102"/>
    </location>
</feature>
<feature type="sequence conflict" description="In Ref. 2; BAG56685." evidence="25" ref="2">
    <original>R</original>
    <variation>G</variation>
    <location>
        <position position="313"/>
    </location>
</feature>
<feature type="helix" evidence="37">
    <location>
        <begin position="15"/>
        <end position="17"/>
    </location>
</feature>
<feature type="helix" evidence="36">
    <location>
        <begin position="19"/>
        <end position="21"/>
    </location>
</feature>
<feature type="strand" evidence="32">
    <location>
        <begin position="22"/>
        <end position="27"/>
    </location>
</feature>
<feature type="strand" evidence="32">
    <location>
        <begin position="30"/>
        <end position="32"/>
    </location>
</feature>
<feature type="strand" evidence="37">
    <location>
        <begin position="34"/>
        <end position="36"/>
    </location>
</feature>
<feature type="strand" evidence="32">
    <location>
        <begin position="38"/>
        <end position="44"/>
    </location>
</feature>
<feature type="strand" evidence="37">
    <location>
        <begin position="46"/>
        <end position="48"/>
    </location>
</feature>
<feature type="strand" evidence="32">
    <location>
        <begin position="55"/>
        <end position="60"/>
    </location>
</feature>
<feature type="helix" evidence="32">
    <location>
        <begin position="66"/>
        <end position="68"/>
    </location>
</feature>
<feature type="strand" evidence="32">
    <location>
        <begin position="70"/>
        <end position="74"/>
    </location>
</feature>
<feature type="helix" evidence="36">
    <location>
        <begin position="84"/>
        <end position="86"/>
    </location>
</feature>
<feature type="strand" evidence="32">
    <location>
        <begin position="89"/>
        <end position="93"/>
    </location>
</feature>
<feature type="helix" evidence="32">
    <location>
        <begin position="95"/>
        <end position="97"/>
    </location>
</feature>
<feature type="strand" evidence="32">
    <location>
        <begin position="105"/>
        <end position="110"/>
    </location>
</feature>
<feature type="strand" evidence="32">
    <location>
        <begin position="116"/>
        <end position="119"/>
    </location>
</feature>
<feature type="strand" evidence="32">
    <location>
        <begin position="123"/>
        <end position="126"/>
    </location>
</feature>
<feature type="strand" evidence="33">
    <location>
        <begin position="133"/>
        <end position="135"/>
    </location>
</feature>
<feature type="turn" evidence="35">
    <location>
        <begin position="401"/>
        <end position="403"/>
    </location>
</feature>
<feature type="strand" evidence="35">
    <location>
        <begin position="404"/>
        <end position="406"/>
    </location>
</feature>
<feature type="helix" evidence="35">
    <location>
        <begin position="410"/>
        <end position="413"/>
    </location>
</feature>
<feature type="strand" evidence="34">
    <location>
        <begin position="419"/>
        <end position="421"/>
    </location>
</feature>
<feature type="turn" evidence="34">
    <location>
        <begin position="423"/>
        <end position="425"/>
    </location>
</feature>
<feature type="strand" evidence="34">
    <location>
        <begin position="428"/>
        <end position="430"/>
    </location>
</feature>
<feature type="helix" evidence="31">
    <location>
        <begin position="431"/>
        <end position="433"/>
    </location>
</feature>
<feature type="helix" evidence="34">
    <location>
        <begin position="434"/>
        <end position="443"/>
    </location>
</feature>
<comment type="function">
    <text evidence="7 8 9 10 13">Xenophagy-specific receptor required for autophagy-mediated intracellular bacteria degradation. Acts as an effector protein of galectin-sensed membrane damage that restricts the proliferation of infecting pathogens such as Salmonella typhimurium upon entry into the cytosol by targeting LGALS8-associated bacteria for autophagy (PubMed:22246324). Initially orchestrates bacteria targeting to autophagosomes and subsequently ensures pathogen degradation by regulating pathogen-containing autophagosome maturation (PubMed:23022382, PubMed:25771791). Bacteria targeting to autophagosomes relies on its interaction with MAP1LC3A, MAP1LC3B and/or GABARAPL2, whereas regulation of pathogen-containing autophagosome maturation requires the interaction with MAP3LC3C (PubMed:23022382, PubMed:25771791). May play a role in ruffle formation and actin cytoskeleton organization and seems to negatively regulate constitutive secretion (PubMed:17635994).</text>
</comment>
<comment type="subunit">
    <text evidence="4 7 8 9 10 11 13 14 16">Dimer (PubMed:23511477). Part of a complex consisting of CALCOCO2, TAX1BP1 and MYO6 (PubMed:17635994). Interacts with MYO6 (PubMed:31371777). Interacts with GEMIN4 (PubMed:12869526). Interacts with ATG8 family members MAP1LC3A, MAP1LC3B, GABARAP, GABARAPL1 and GABARAPL2 (PubMed:25771791). Interacts with ATG8 family member MAP1LC3C (PubMed:23022382). Interacts with LGALS8 (PubMed:22246324, PubMed:23386746, PubMed:23511477, PubMed:25771791). Interacts with TOM1; the interaction is indirect and is mediated by MYO6, which acts as a bridge between TOM1 and CALCOCO2 (PubMed:31371777). Interacts with AZI2 (PubMed:30459273).</text>
</comment>
<comment type="subunit">
    <text evidence="15">(Microbial infection) Interacts with Lassa virus protein Z.</text>
</comment>
<comment type="subunit">
    <text evidence="15">(Microbial infection) Interacts with Mopeia virus protein Z.</text>
</comment>
<comment type="interaction">
    <interactant intactId="EBI-739580">
        <id>Q13137</id>
    </interactant>
    <interactant intactId="EBI-10222656">
        <id>Q02040-3</id>
        <label>AKAP17A</label>
    </interactant>
    <organismsDiffer>false</organismsDiffer>
    <experiments>3</experiments>
</comment>
<comment type="interaction">
    <interactant intactId="EBI-739580">
        <id>Q13137</id>
    </interactant>
    <interactant intactId="EBI-8583355">
        <id>Q9Y4X0</id>
        <label>AMMECR1</label>
    </interactant>
    <organismsDiffer>false</organismsDiffer>
    <experiments>4</experiments>
</comment>
<comment type="interaction">
    <interactant intactId="EBI-739580">
        <id>Q13137</id>
    </interactant>
    <interactant intactId="EBI-12823597">
        <id>Q9Y4X0-3</id>
        <label>AMMECR1</label>
    </interactant>
    <organismsDiffer>false</organismsDiffer>
    <experiments>3</experiments>
</comment>
<comment type="interaction">
    <interactant intactId="EBI-739580">
        <id>Q13137</id>
    </interactant>
    <interactant intactId="EBI-10252815">
        <id>Q6P4J0</id>
        <label>ARD1A</label>
    </interactant>
    <organismsDiffer>false</organismsDiffer>
    <experiments>3</experiments>
</comment>
<comment type="interaction">
    <interactant intactId="EBI-739580">
        <id>Q13137</id>
    </interactant>
    <interactant intactId="EBI-745468">
        <id>Q8N4T4</id>
        <label>ARHGEF39</label>
    </interactant>
    <organismsDiffer>false</organismsDiffer>
    <experiments>5</experiments>
</comment>
<comment type="interaction">
    <interactant intactId="EBI-739580">
        <id>Q13137</id>
    </interactant>
    <interactant intactId="EBI-602199">
        <id>Q12774</id>
        <label>ARHGEF5</label>
    </interactant>
    <organismsDiffer>false</organismsDiffer>
    <experiments>3</experiments>
</comment>
<comment type="interaction">
    <interactant intactId="EBI-739580">
        <id>Q13137</id>
    </interactant>
    <interactant intactId="EBI-745689">
        <id>Q7L5A3</id>
        <label>ATOSB</label>
    </interactant>
    <organismsDiffer>false</organismsDiffer>
    <experiments>3</experiments>
</comment>
<comment type="interaction">
    <interactant intactId="EBI-739580">
        <id>Q13137</id>
    </interactant>
    <interactant intactId="EBI-16429430">
        <id>A0A0S2Z4M1</id>
        <label>AXIN1</label>
    </interactant>
    <organismsDiffer>false</organismsDiffer>
    <experiments>3</experiments>
</comment>
<comment type="interaction">
    <interactant intactId="EBI-739580">
        <id>Q13137</id>
    </interactant>
    <interactant intactId="EBI-710484">
        <id>O15169</id>
        <label>AXIN1</label>
    </interactant>
    <organismsDiffer>false</organismsDiffer>
    <experiments>3</experiments>
</comment>
<comment type="interaction">
    <interactant intactId="EBI-739580">
        <id>Q13137</id>
    </interactant>
    <interactant intactId="EBI-742750">
        <id>Q8TBE0</id>
        <label>BAHD1</label>
    </interactant>
    <organismsDiffer>false</organismsDiffer>
    <experiments>3</experiments>
</comment>
<comment type="interaction">
    <interactant intactId="EBI-739580">
        <id>Q13137</id>
    </interactant>
    <interactant intactId="EBI-2548400">
        <id>Q9UHQ4</id>
        <label>BCAP29</label>
    </interactant>
    <organismsDiffer>false</organismsDiffer>
    <experiments>2</experiments>
</comment>
<comment type="interaction">
    <interactant intactId="EBI-739580">
        <id>Q13137</id>
    </interactant>
    <interactant intactId="EBI-10174813">
        <id>A8KA13</id>
        <label>BCL6B</label>
    </interactant>
    <organismsDiffer>false</organismsDiffer>
    <experiments>3</experiments>
</comment>
<comment type="interaction">
    <interactant intactId="EBI-739580">
        <id>Q13137</id>
    </interactant>
    <interactant intactId="EBI-745073">
        <id>Q9BXY8</id>
        <label>BEX2</label>
    </interactant>
    <organismsDiffer>false</organismsDiffer>
    <experiments>3</experiments>
</comment>
<comment type="interaction">
    <interactant intactId="EBI-739580">
        <id>Q13137</id>
    </interactant>
    <interactant intactId="EBI-712912">
        <id>Q9HC52</id>
        <label>CBX8</label>
    </interactant>
    <organismsDiffer>false</organismsDiffer>
    <experiments>6</experiments>
</comment>
<comment type="interaction">
    <interactant intactId="EBI-739580">
        <id>Q13137</id>
    </interactant>
    <interactant intactId="EBI-744556">
        <id>Q96HB5</id>
        <label>CCDC120</label>
    </interactant>
    <organismsDiffer>false</organismsDiffer>
    <experiments>3</experiments>
</comment>
<comment type="interaction">
    <interactant intactId="EBI-739580">
        <id>Q13137</id>
    </interactant>
    <interactant intactId="EBI-741406">
        <id>P51946</id>
        <label>CCNH</label>
    </interactant>
    <organismsDiffer>false</organismsDiffer>
    <experiments>3</experiments>
</comment>
<comment type="interaction">
    <interactant intactId="EBI-739580">
        <id>Q13137</id>
    </interactant>
    <interactant intactId="EBI-374980">
        <id>O00311</id>
        <label>CDC7</label>
    </interactant>
    <organismsDiffer>false</organismsDiffer>
    <experiments>3</experiments>
</comment>
<comment type="interaction">
    <interactant intactId="EBI-739580">
        <id>Q13137</id>
    </interactant>
    <interactant intactId="EBI-11478642">
        <id>P08218</id>
        <label>CELA2B</label>
    </interactant>
    <organismsDiffer>false</organismsDiffer>
    <experiments>3</experiments>
</comment>
<comment type="interaction">
    <interactant intactId="EBI-739580">
        <id>Q13137</id>
    </interactant>
    <interactant intactId="EBI-1104570">
        <id>Q8IYX8</id>
        <label>CEP57L1</label>
    </interactant>
    <organismsDiffer>false</organismsDiffer>
    <experiments>3</experiments>
</comment>
<comment type="interaction">
    <interactant intactId="EBI-739580">
        <id>Q13137</id>
    </interactant>
    <interactant intactId="EBI-743375">
        <id>Q9NX63</id>
        <label>CHCHD3</label>
    </interactant>
    <organismsDiffer>false</organismsDiffer>
    <experiments>3</experiments>
</comment>
<comment type="interaction">
    <interactant intactId="EBI-739580">
        <id>Q13137</id>
    </interactant>
    <interactant intactId="EBI-741032">
        <id>Q8NE01</id>
        <label>CNNM3</label>
    </interactant>
    <organismsDiffer>false</organismsDiffer>
    <experiments>3</experiments>
</comment>
<comment type="interaction">
    <interactant intactId="EBI-739580">
        <id>Q13137</id>
    </interactant>
    <interactant intactId="EBI-12012272">
        <id>Q9UBL6-2</id>
        <label>CPNE7</label>
    </interactant>
    <organismsDiffer>false</organismsDiffer>
    <experiments>3</experiments>
</comment>
<comment type="interaction">
    <interactant intactId="EBI-739580">
        <id>Q13137</id>
    </interactant>
    <interactant intactId="EBI-5453285">
        <id>Q2TBE0</id>
        <label>CWF19L2</label>
    </interactant>
    <organismsDiffer>false</organismsDiffer>
    <experiments>3</experiments>
</comment>
<comment type="interaction">
    <interactant intactId="EBI-739580">
        <id>Q13137</id>
    </interactant>
    <interactant intactId="EBI-724310">
        <id>Q15038</id>
        <label>DAZAP2</label>
    </interactant>
    <organismsDiffer>false</organismsDiffer>
    <experiments>4</experiments>
</comment>
<comment type="interaction">
    <interactant intactId="EBI-739580">
        <id>Q13137</id>
    </interactant>
    <interactant intactId="EBI-2134033">
        <id>Q9UJW0</id>
        <label>DCTN4</label>
    </interactant>
    <organismsDiffer>false</organismsDiffer>
    <experiments>3</experiments>
</comment>
<comment type="interaction">
    <interactant intactId="EBI-739580">
        <id>Q13137</id>
    </interactant>
    <interactant intactId="EBI-8646694">
        <id>O43602</id>
        <label>DCX</label>
    </interactant>
    <organismsDiffer>false</organismsDiffer>
    <experiments>3</experiments>
</comment>
<comment type="interaction">
    <interactant intactId="EBI-739580">
        <id>Q13137</id>
    </interactant>
    <interactant intactId="EBI-742054">
        <id>Q96D03</id>
        <label>DDIT4L</label>
    </interactant>
    <organismsDiffer>false</organismsDiffer>
    <experiments>3</experiments>
</comment>
<comment type="interaction">
    <interactant intactId="EBI-739580">
        <id>Q13137</id>
    </interactant>
    <interactant intactId="EBI-351257">
        <id>P26196</id>
        <label>DDX6</label>
    </interactant>
    <organismsDiffer>false</organismsDiffer>
    <experiments>6</experiments>
</comment>
<comment type="interaction">
    <interactant intactId="EBI-739580">
        <id>Q13137</id>
    </interactant>
    <interactant intactId="EBI-448771">
        <id>Q92608</id>
        <label>DOCK2</label>
    </interactant>
    <organismsDiffer>false</organismsDiffer>
    <experiments>3</experiments>
</comment>
<comment type="interaction">
    <interactant intactId="EBI-739580">
        <id>Q13137</id>
    </interactant>
    <interactant intactId="EBI-715161">
        <id>Q9UNI6</id>
        <label>DUSP12</label>
    </interactant>
    <organismsDiffer>false</organismsDiffer>
    <experiments>5</experiments>
</comment>
<comment type="interaction">
    <interactant intactId="EBI-739580">
        <id>Q13137</id>
    </interactant>
    <interactant intactId="EBI-2924519">
        <id>Q9BV47</id>
        <label>DUSP26</label>
    </interactant>
    <organismsDiffer>false</organismsDiffer>
    <experiments>3</experiments>
</comment>
<comment type="interaction">
    <interactant intactId="EBI-739580">
        <id>Q13137</id>
    </interactant>
    <interactant intactId="EBI-1048486">
        <id>O43324</id>
        <label>EEF1E1</label>
    </interactant>
    <organismsDiffer>false</organismsDiffer>
    <experiments>3</experiments>
</comment>
<comment type="interaction">
    <interactant intactId="EBI-739580">
        <id>Q13137</id>
    </interactant>
    <interactant intactId="EBI-743105">
        <id>Q5JVL4</id>
        <label>EFHC1</label>
    </interactant>
    <organismsDiffer>false</organismsDiffer>
    <experiments>3</experiments>
</comment>
<comment type="interaction">
    <interactant intactId="EBI-739580">
        <id>Q13137</id>
    </interactant>
    <interactant intactId="EBI-744099">
        <id>Q9H0I2</id>
        <label>ENKD1</label>
    </interactant>
    <organismsDiffer>false</organismsDiffer>
    <experiments>4</experiments>
</comment>
<comment type="interaction">
    <interactant intactId="EBI-739580">
        <id>Q13137</id>
    </interactant>
    <interactant intactId="EBI-371876">
        <id>Q9NQT4</id>
        <label>EXOSC5</label>
    </interactant>
    <organismsDiffer>false</organismsDiffer>
    <experiments>3</experiments>
</comment>
<comment type="interaction">
    <interactant intactId="EBI-739580">
        <id>Q13137</id>
    </interactant>
    <interactant intactId="EBI-719941">
        <id>Q3B820</id>
        <label>FAM161A</label>
    </interactant>
    <organismsDiffer>false</organismsDiffer>
    <experiments>6</experiments>
</comment>
<comment type="interaction">
    <interactant intactId="EBI-739580">
        <id>Q13137</id>
    </interactant>
    <interactant intactId="EBI-7957930">
        <id>Q92567</id>
        <label>FAM168A</label>
    </interactant>
    <organismsDiffer>false</organismsDiffer>
    <experiments>3</experiments>
</comment>
<comment type="interaction">
    <interactant intactId="EBI-739580">
        <id>Q13137</id>
    </interactant>
    <interactant intactId="EBI-6658203">
        <id>Q86YD7</id>
        <label>FAM90A1</label>
    </interactant>
    <organismsDiffer>false</organismsDiffer>
    <experiments>7</experiments>
</comment>
<comment type="interaction">
    <interactant intactId="EBI-739580">
        <id>Q13137</id>
    </interactant>
    <interactant intactId="EBI-2513774">
        <id>O95363</id>
        <label>FARS2</label>
    </interactant>
    <organismsDiffer>false</organismsDiffer>
    <experiments>7</experiments>
</comment>
<comment type="interaction">
    <interactant intactId="EBI-739580">
        <id>Q13137</id>
    </interactant>
    <interactant intactId="EBI-10244131">
        <id>Q8TES7-6</id>
        <label>FBF1</label>
    </interactant>
    <organismsDiffer>false</organismsDiffer>
    <experiments>3</experiments>
</comment>
<comment type="interaction">
    <interactant intactId="EBI-739580">
        <id>Q13137</id>
    </interactant>
    <interactant intactId="EBI-744419">
        <id>Q96D16</id>
        <label>FBXL18</label>
    </interactant>
    <organismsDiffer>false</organismsDiffer>
    <experiments>4</experiments>
</comment>
<comment type="interaction">
    <interactant intactId="EBI-739580">
        <id>Q13137</id>
    </interactant>
    <interactant intactId="EBI-719882">
        <id>Q9UIM3</id>
        <label>FKBPL</label>
    </interactant>
    <organismsDiffer>false</organismsDiffer>
    <experiments>3</experiments>
</comment>
<comment type="interaction">
    <interactant intactId="EBI-739580">
        <id>Q13137</id>
    </interactant>
    <interactant intactId="EBI-744935">
        <id>Q9BVV2</id>
        <label>FNDC11</label>
    </interactant>
    <organismsDiffer>false</organismsDiffer>
    <experiments>4</experiments>
</comment>
<comment type="interaction">
    <interactant intactId="EBI-739580">
        <id>Q13137</id>
    </interactant>
    <interactant intactId="EBI-11961494">
        <id>Q6VB84</id>
        <label>FOXD4L3</label>
    </interactant>
    <organismsDiffer>false</organismsDiffer>
    <experiments>3</experiments>
</comment>
<comment type="interaction">
    <interactant intactId="EBI-739580">
        <id>Q13137</id>
    </interactant>
    <interactant intactId="EBI-746969">
        <id>Q9H0R8</id>
        <label>GABARAPL1</label>
    </interactant>
    <organismsDiffer>false</organismsDiffer>
    <experiments>7</experiments>
</comment>
<comment type="interaction">
    <interactant intactId="EBI-739580">
        <id>Q13137</id>
    </interactant>
    <interactant intactId="EBI-720116">
        <id>P60520</id>
        <label>GABARAPL2</label>
    </interactant>
    <organismsDiffer>false</organismsDiffer>
    <experiments>7</experiments>
</comment>
<comment type="interaction">
    <interactant intactId="EBI-739580">
        <id>Q13137</id>
    </interactant>
    <interactant intactId="EBI-923440">
        <id>Q8WXI9</id>
        <label>GATAD2B</label>
    </interactant>
    <organismsDiffer>false</organismsDiffer>
    <experiments>3</experiments>
</comment>
<comment type="interaction">
    <interactant intactId="EBI-739580">
        <id>Q13137</id>
    </interactant>
    <interactant intactId="EBI-947242">
        <id>P28676</id>
        <label>GCA</label>
    </interactant>
    <organismsDiffer>false</organismsDiffer>
    <experiments>3</experiments>
</comment>
<comment type="interaction">
    <interactant intactId="EBI-739580">
        <id>Q13137</id>
    </interactant>
    <interactant intactId="EBI-748515">
        <id>Q8IVS8</id>
        <label>GLYCTK</label>
    </interactant>
    <organismsDiffer>false</organismsDiffer>
    <experiments>3</experiments>
</comment>
<comment type="interaction">
    <interactant intactId="EBI-739580">
        <id>Q13137</id>
    </interactant>
    <interactant intactId="EBI-11953488">
        <id>P56524-2</id>
        <label>HDAC4</label>
    </interactant>
    <organismsDiffer>false</organismsDiffer>
    <experiments>3</experiments>
</comment>
<comment type="interaction">
    <interactant intactId="EBI-739580">
        <id>Q13137</id>
    </interactant>
    <interactant intactId="EBI-10276431">
        <id>Q8WUI4-5</id>
        <label>HDAC7</label>
    </interactant>
    <organismsDiffer>false</organismsDiffer>
    <experiments>3</experiments>
</comment>
<comment type="interaction">
    <interactant intactId="EBI-739580">
        <id>Q13137</id>
    </interactant>
    <interactant intactId="EBI-12094670">
        <id>Q8WUI4-6</id>
        <label>HDAC7</label>
    </interactant>
    <organismsDiffer>false</organismsDiffer>
    <experiments>3</experiments>
</comment>
<comment type="interaction">
    <interactant intactId="EBI-739580">
        <id>Q13137</id>
    </interactant>
    <interactant intactId="EBI-3893317">
        <id>P09067</id>
        <label>HOXB5</label>
    </interactant>
    <organismsDiffer>false</organismsDiffer>
    <experiments>3</experiments>
</comment>
<comment type="interaction">
    <interactant intactId="EBI-739580">
        <id>Q13137</id>
    </interactant>
    <interactant intactId="EBI-745290">
        <id>P17482</id>
        <label>HOXB9</label>
    </interactant>
    <organismsDiffer>false</organismsDiffer>
    <experiments>3</experiments>
</comment>
<comment type="interaction">
    <interactant intactId="EBI-739580">
        <id>Q13137</id>
    </interactant>
    <interactant intactId="EBI-17178971">
        <id>Q14005-2</id>
        <label>IL16</label>
    </interactant>
    <organismsDiffer>false</organismsDiffer>
    <experiments>3</experiments>
</comment>
<comment type="interaction">
    <interactant intactId="EBI-739580">
        <id>Q13137</id>
    </interactant>
    <interactant intactId="EBI-10220600">
        <id>Q8NA54</id>
        <label>IQUB</label>
    </interactant>
    <organismsDiffer>false</organismsDiffer>
    <experiments>3</experiments>
</comment>
<comment type="interaction">
    <interactant intactId="EBI-739580">
        <id>Q13137</id>
    </interactant>
    <interactant intactId="EBI-740244">
        <id>Q7Z3B3</id>
        <label>KANSL1</label>
    </interactant>
    <organismsDiffer>false</organismsDiffer>
    <experiments>5</experiments>
</comment>
<comment type="interaction">
    <interactant intactId="EBI-739580">
        <id>Q13137</id>
    </interactant>
    <interactant intactId="EBI-9477654">
        <id>Q6PF15</id>
        <label>KLHL35</label>
    </interactant>
    <organismsDiffer>false</organismsDiffer>
    <experiments>3</experiments>
</comment>
<comment type="interaction">
    <interactant intactId="EBI-739580">
        <id>Q13137</id>
    </interactant>
    <interactant intactId="EBI-739890">
        <id>Q9P2K6</id>
        <label>KLHL42</label>
    </interactant>
    <organismsDiffer>false</organismsDiffer>
    <experiments>3</experiments>
</comment>
<comment type="interaction">
    <interactant intactId="EBI-739580">
        <id>Q13137</id>
    </interactant>
    <interactant intactId="EBI-726510">
        <id>Q96BZ8</id>
        <label>LENG1</label>
    </interactant>
    <organismsDiffer>false</organismsDiffer>
    <experiments>3</experiments>
</comment>
<comment type="interaction">
    <interactant intactId="EBI-739580">
        <id>Q13137</id>
    </interactant>
    <interactant intactId="EBI-740058">
        <id>O00214</id>
        <label>LGALS8</label>
    </interactant>
    <organismsDiffer>false</organismsDiffer>
    <experiments>9</experiments>
</comment>
<comment type="interaction">
    <interactant intactId="EBI-739580">
        <id>Q13137</id>
    </interactant>
    <interactant intactId="EBI-12069522">
        <id>O00214-2</id>
        <label>LGALS8</label>
    </interactant>
    <organismsDiffer>false</organismsDiffer>
    <experiments>3</experiments>
</comment>
<comment type="interaction">
    <interactant intactId="EBI-739580">
        <id>Q13137</id>
    </interactant>
    <interactant intactId="EBI-10257651">
        <id>Q7Z4I7-5</id>
        <label>LIMS2</label>
    </interactant>
    <organismsDiffer>false</organismsDiffer>
    <experiments>3</experiments>
</comment>
<comment type="interaction">
    <interactant intactId="EBI-739580">
        <id>Q13137</id>
    </interactant>
    <interactant intactId="EBI-725647">
        <id>Q99732</id>
        <label>LITAF</label>
    </interactant>
    <organismsDiffer>false</organismsDiffer>
    <experiments>7</experiments>
</comment>
<comment type="interaction">
    <interactant intactId="EBI-739580">
        <id>Q13137</id>
    </interactant>
    <interactant intactId="EBI-10298556">
        <id>Q9BU23</id>
        <label>LMF2</label>
    </interactant>
    <organismsDiffer>false</organismsDiffer>
    <experiments>3</experiments>
</comment>
<comment type="interaction">
    <interactant intactId="EBI-739580">
        <id>Q13137</id>
    </interactant>
    <interactant intactId="EBI-739696">
        <id>P25791</id>
        <label>LMO2</label>
    </interactant>
    <organismsDiffer>false</organismsDiffer>
    <experiments>3</experiments>
</comment>
<comment type="interaction">
    <interactant intactId="EBI-739580">
        <id>Q13137</id>
    </interactant>
    <interactant intactId="EBI-2798728">
        <id>P61968</id>
        <label>LMO4</label>
    </interactant>
    <organismsDiffer>false</organismsDiffer>
    <experiments>3</experiments>
</comment>
<comment type="interaction">
    <interactant intactId="EBI-739580">
        <id>Q13137</id>
    </interactant>
    <interactant intactId="EBI-2341787">
        <id>Q17RB8</id>
        <label>LONRF1</label>
    </interactant>
    <organismsDiffer>false</organismsDiffer>
    <experiments>3</experiments>
</comment>
<comment type="interaction">
    <interactant intactId="EBI-739580">
        <id>Q13137</id>
    </interactant>
    <interactant intactId="EBI-372521">
        <id>Q9Y4Z0</id>
        <label>LSM4</label>
    </interactant>
    <organismsDiffer>false</organismsDiffer>
    <experiments>7</experiments>
</comment>
<comment type="interaction">
    <interactant intactId="EBI-739580">
        <id>Q13137</id>
    </interactant>
    <interactant intactId="EBI-746778">
        <id>Q96A72</id>
        <label>MAGOHB</label>
    </interactant>
    <organismsDiffer>false</organismsDiffer>
    <experiments>6</experiments>
</comment>
<comment type="interaction">
    <interactant intactId="EBI-739580">
        <id>Q13137</id>
    </interactant>
    <interactant intactId="EBI-2603996">
        <id>Q9BXW4</id>
        <label>MAP1LC3C</label>
    </interactant>
    <organismsDiffer>false</organismsDiffer>
    <experiments>3</experiments>
</comment>
<comment type="interaction">
    <interactant intactId="EBI-739580">
        <id>Q13137</id>
    </interactant>
    <interactant intactId="EBI-995373">
        <id>Q7Z434</id>
        <label>MAVS</label>
    </interactant>
    <organismsDiffer>false</organismsDiffer>
    <experiments>3</experiments>
</comment>
<comment type="interaction">
    <interactant intactId="EBI-739580">
        <id>Q13137</id>
    </interactant>
    <interactant intactId="EBI-749353">
        <id>Q9H7H0</id>
        <label>METTL17</label>
    </interactant>
    <organismsDiffer>false</organismsDiffer>
    <experiments>7</experiments>
</comment>
<comment type="interaction">
    <interactant intactId="EBI-739580">
        <id>Q13137</id>
    </interactant>
    <interactant intactId="EBI-11098807">
        <id>Q9H7H0-2</id>
        <label>METTL17</label>
    </interactant>
    <organismsDiffer>false</organismsDiffer>
    <experiments>3</experiments>
</comment>
<comment type="interaction">
    <interactant intactId="EBI-739580">
        <id>Q13137</id>
    </interactant>
    <interactant intactId="EBI-10172526">
        <id>Q9UJV3-2</id>
        <label>MID2</label>
    </interactant>
    <organismsDiffer>false</organismsDiffer>
    <experiments>3</experiments>
</comment>
<comment type="interaction">
    <interactant intactId="EBI-739580">
        <id>Q13137</id>
    </interactant>
    <interactant intactId="EBI-1757866">
        <id>P00540</id>
        <label>MOS</label>
    </interactant>
    <organismsDiffer>false</organismsDiffer>
    <experiments>8</experiments>
</comment>
<comment type="interaction">
    <interactant intactId="EBI-739580">
        <id>Q13137</id>
    </interactant>
    <interactant intactId="EBI-2556166">
        <id>Q9NVV4</id>
        <label>MTPAP</label>
    </interactant>
    <organismsDiffer>false</organismsDiffer>
    <experiments>4</experiments>
</comment>
<comment type="interaction">
    <interactant intactId="EBI-739580">
        <id>Q13137</id>
    </interactant>
    <interactant intactId="EBI-752241">
        <id>P50539</id>
        <label>MXI1</label>
    </interactant>
    <organismsDiffer>false</organismsDiffer>
    <experiments>3</experiments>
</comment>
<comment type="interaction">
    <interactant intactId="EBI-739580">
        <id>Q13137</id>
    </interactant>
    <interactant intactId="EBI-10211940">
        <id>P50539-3</id>
        <label>MXI1</label>
    </interactant>
    <organismsDiffer>false</organismsDiffer>
    <experiments>6</experiments>
</comment>
<comment type="interaction">
    <interactant intactId="EBI-739580">
        <id>Q13137</id>
    </interactant>
    <interactant intactId="EBI-747693">
        <id>P41227</id>
        <label>NAA10</label>
    </interactant>
    <organismsDiffer>false</organismsDiffer>
    <experiments>7</experiments>
</comment>
<comment type="interaction">
    <interactant intactId="EBI-739580">
        <id>Q13137</id>
    </interactant>
    <interactant intactId="EBI-725252">
        <id>Q9UMS0</id>
        <label>NFU1</label>
    </interactant>
    <organismsDiffer>false</organismsDiffer>
    <experiments>3</experiments>
</comment>
<comment type="interaction">
    <interactant intactId="EBI-739580">
        <id>Q13137</id>
    </interactant>
    <interactant intactId="EBI-724639">
        <id>Q9UBV8</id>
        <label>PEF1</label>
    </interactant>
    <organismsDiffer>false</organismsDiffer>
    <experiments>4</experiments>
</comment>
<comment type="interaction">
    <interactant intactId="EBI-739580">
        <id>Q13137</id>
    </interactant>
    <interactant intactId="EBI-2858265">
        <id>Q86TG7</id>
        <label>PEG10</label>
    </interactant>
    <organismsDiffer>false</organismsDiffer>
    <experiments>4</experiments>
</comment>
<comment type="interaction">
    <interactant intactId="EBI-739580">
        <id>Q13137</id>
    </interactant>
    <interactant intactId="EBI-357275">
        <id>Q99471</id>
        <label>PFDN5</label>
    </interactant>
    <organismsDiffer>false</organismsDiffer>
    <experiments>4</experiments>
</comment>
<comment type="interaction">
    <interactant intactId="EBI-739580">
        <id>Q13137</id>
    </interactant>
    <interactant intactId="EBI-530034">
        <id>O43189</id>
        <label>PHF1</label>
    </interactant>
    <organismsDiffer>false</organismsDiffer>
    <experiments>3</experiments>
</comment>
<comment type="interaction">
    <interactant intactId="EBI-739580">
        <id>Q13137</id>
    </interactant>
    <interactant intactId="EBI-12014286">
        <id>Q494U1-3</id>
        <label>PLEKHN1</label>
    </interactant>
    <organismsDiffer>false</organismsDiffer>
    <experiments>3</experiments>
</comment>
<comment type="interaction">
    <interactant intactId="EBI-739580">
        <id>Q13137</id>
    </interactant>
    <interactant intactId="EBI-2557469">
        <id>Q6NYC8</id>
        <label>PPP1R18</label>
    </interactant>
    <organismsDiffer>false</organismsDiffer>
    <experiments>3</experiments>
</comment>
<comment type="interaction">
    <interactant intactId="EBI-739580">
        <id>Q13137</id>
    </interactant>
    <interactant intactId="EBI-1383852">
        <id>P54646</id>
        <label>PRKAA2</label>
    </interactant>
    <organismsDiffer>false</organismsDiffer>
    <experiments>3</experiments>
</comment>
<comment type="interaction">
    <interactant intactId="EBI-739580">
        <id>Q13137</id>
    </interactant>
    <interactant intactId="EBI-2798416">
        <id>Q99633</id>
        <label>PRPF18</label>
    </interactant>
    <organismsDiffer>false</organismsDiffer>
    <experiments>3</experiments>
</comment>
<comment type="interaction">
    <interactant intactId="EBI-739580">
        <id>Q13137</id>
    </interactant>
    <interactant intactId="EBI-1567797">
        <id>Q8WWY3</id>
        <label>PRPF31</label>
    </interactant>
    <organismsDiffer>false</organismsDiffer>
    <experiments>6</experiments>
</comment>
<comment type="interaction">
    <interactant intactId="EBI-739580">
        <id>Q13137</id>
    </interactant>
    <interactant intactId="EBI-359352">
        <id>P25786</id>
        <label>PSMA1</label>
    </interactant>
    <organismsDiffer>false</organismsDiffer>
    <experiments>4</experiments>
</comment>
<comment type="interaction">
    <interactant intactId="EBI-739580">
        <id>Q13137</id>
    </interactant>
    <interactant intactId="EBI-1236916">
        <id>Q14997</id>
        <label>PSME4</label>
    </interactant>
    <organismsDiffer>false</organismsDiffer>
    <experiments>3</experiments>
</comment>
<comment type="interaction">
    <interactant intactId="EBI-739580">
        <id>Q13137</id>
    </interactant>
    <interactant intactId="EBI-347462">
        <id>P47897</id>
        <label>QARS1</label>
    </interactant>
    <organismsDiffer>false</organismsDiffer>
    <experiments>3</experiments>
</comment>
<comment type="interaction">
    <interactant intactId="EBI-739580">
        <id>Q13137</id>
    </interactant>
    <interactant intactId="EBI-2514922">
        <id>Q96T37</id>
        <label>RBM15</label>
    </interactant>
    <organismsDiffer>false</organismsDiffer>
    <experiments>3</experiments>
</comment>
<comment type="interaction">
    <interactant intactId="EBI-739580">
        <id>Q13137</id>
    </interactant>
    <interactant intactId="EBI-366017">
        <id>Q13671</id>
        <label>RIN1</label>
    </interactant>
    <organismsDiffer>false</organismsDiffer>
    <experiments>4</experiments>
</comment>
<comment type="interaction">
    <interactant intactId="EBI-739580">
        <id>Q13137</id>
    </interactant>
    <interactant intactId="EBI-358122">
        <id>P32969</id>
        <label>RPL9P9</label>
    </interactant>
    <organismsDiffer>false</organismsDiffer>
    <experiments>3</experiments>
</comment>
<comment type="interaction">
    <interactant intactId="EBI-739580">
        <id>Q13137</id>
    </interactant>
    <interactant intactId="EBI-357375">
        <id>P62979</id>
        <label>RPS27A</label>
    </interactant>
    <organismsDiffer>false</organismsDiffer>
    <experiments>3</experiments>
</comment>
<comment type="interaction">
    <interactant intactId="EBI-739580">
        <id>Q13137</id>
    </interactant>
    <interactant intactId="EBI-10217913">
        <id>Q14D33</id>
        <label>RTP5</label>
    </interactant>
    <organismsDiffer>false</organismsDiffer>
    <experiments>6</experiments>
</comment>
<comment type="interaction">
    <interactant intactId="EBI-739580">
        <id>Q13137</id>
    </interactant>
    <interactant intactId="EBI-16429492">
        <id>P28702-3</id>
        <label>RXRB</label>
    </interactant>
    <organismsDiffer>false</organismsDiffer>
    <experiments>3</experiments>
</comment>
<comment type="interaction">
    <interactant intactId="EBI-739580">
        <id>Q13137</id>
    </interactant>
    <interactant intactId="EBI-745846">
        <id>P57086</id>
        <label>SCAND1</label>
    </interactant>
    <organismsDiffer>false</organismsDiffer>
    <experiments>3</experiments>
</comment>
<comment type="interaction">
    <interactant intactId="EBI-739580">
        <id>Q13137</id>
    </interactant>
    <interactant intactId="EBI-748391">
        <id>Q9BWG6</id>
        <label>SCNM1</label>
    </interactant>
    <organismsDiffer>false</organismsDiffer>
    <experiments>3</experiments>
</comment>
<comment type="interaction">
    <interactant intactId="EBI-739580">
        <id>Q13137</id>
    </interactant>
    <interactant intactId="EBI-727004">
        <id>O00560</id>
        <label>SDCBP</label>
    </interactant>
    <organismsDiffer>false</organismsDiffer>
    <experiments>3</experiments>
</comment>
<comment type="interaction">
    <interactant intactId="EBI-739580">
        <id>Q13137</id>
    </interactant>
    <interactant intactId="EBI-12233047">
        <id>Q9C0A6-3</id>
        <label>SETD5</label>
    </interactant>
    <organismsDiffer>false</organismsDiffer>
    <experiments>3</experiments>
</comment>
<comment type="interaction">
    <interactant intactId="EBI-739580">
        <id>Q13137</id>
    </interactant>
    <interactant intactId="EBI-78835">
        <id>P29353</id>
        <label>SHC1</label>
    </interactant>
    <organismsDiffer>false</organismsDiffer>
    <experiments>3</experiments>
</comment>
<comment type="interaction">
    <interactant intactId="EBI-739580">
        <id>Q13137</id>
    </interactant>
    <interactant intactId="EBI-10223741">
        <id>Q05CH4</id>
        <label>SLC15A3</label>
    </interactant>
    <organismsDiffer>false</organismsDiffer>
    <experiments>3</experiments>
</comment>
<comment type="interaction">
    <interactant intactId="EBI-739580">
        <id>Q13137</id>
    </interactant>
    <interactant intactId="EBI-358489">
        <id>Q96GM5</id>
        <label>SMARCD1</label>
    </interactant>
    <organismsDiffer>false</organismsDiffer>
    <experiments>3</experiments>
</comment>
<comment type="interaction">
    <interactant intactId="EBI-739580">
        <id>Q13137</id>
    </interactant>
    <interactant intactId="EBI-750494">
        <id>P49901</id>
        <label>SMCP</label>
    </interactant>
    <organismsDiffer>false</organismsDiffer>
    <experiments>3</experiments>
</comment>
<comment type="interaction">
    <interactant intactId="EBI-739580">
        <id>Q13137</id>
    </interactant>
    <interactant intactId="EBI-372475">
        <id>P14678-2</id>
        <label>SNRPB</label>
    </interactant>
    <organismsDiffer>false</organismsDiffer>
    <experiments>3</experiments>
</comment>
<comment type="interaction">
    <interactant intactId="EBI-739580">
        <id>Q13137</id>
    </interactant>
    <interactant intactId="EBI-3916986">
        <id>Q86W54</id>
        <label>SPATA24</label>
    </interactant>
    <organismsDiffer>false</organismsDiffer>
    <experiments>3</experiments>
</comment>
<comment type="interaction">
    <interactant intactId="EBI-739580">
        <id>Q13137</id>
    </interactant>
    <interactant intactId="EBI-750459">
        <id>P30626</id>
        <label>SRI</label>
    </interactant>
    <organismsDiffer>false</organismsDiffer>
    <experiments>5</experiments>
</comment>
<comment type="interaction">
    <interactant intactId="EBI-739580">
        <id>Q13137</id>
    </interactant>
    <interactant intactId="EBI-745021">
        <id>Q96FJ0</id>
        <label>STAMBPL1</label>
    </interactant>
    <organismsDiffer>false</organismsDiffer>
    <experiments>3</experiments>
</comment>
<comment type="interaction">
    <interactant intactId="EBI-739580">
        <id>Q13137</id>
    </interactant>
    <interactant intactId="EBI-749295">
        <id>O75716</id>
        <label>STK16</label>
    </interactant>
    <organismsDiffer>false</organismsDiffer>
    <experiments>3</experiments>
</comment>
<comment type="interaction">
    <interactant intactId="EBI-739580">
        <id>Q13137</id>
    </interactant>
    <interactant intactId="EBI-747797">
        <id>Q9BSH4</id>
        <label>TACO1</label>
    </interactant>
    <organismsDiffer>false</organismsDiffer>
    <experiments>3</experiments>
</comment>
<comment type="interaction">
    <interactant intactId="EBI-739580">
        <id>Q13137</id>
    </interactant>
    <interactant intactId="EBI-8787464">
        <id>Q9NU19</id>
        <label>TBC1D22B</label>
    </interactant>
    <organismsDiffer>false</organismsDiffer>
    <experiments>3</experiments>
</comment>
<comment type="interaction">
    <interactant intactId="EBI-739580">
        <id>Q13137</id>
    </interactant>
    <interactant intactId="EBI-356402">
        <id>Q9UHD2</id>
        <label>TBK1</label>
    </interactant>
    <organismsDiffer>false</organismsDiffer>
    <experiments>10</experiments>
</comment>
<comment type="interaction">
    <interactant intactId="EBI-739580">
        <id>Q13137</id>
    </interactant>
    <interactant intactId="EBI-702328">
        <id>Q969Z0</id>
        <label>TBRG4</label>
    </interactant>
    <organismsDiffer>false</organismsDiffer>
    <experiments>3</experiments>
</comment>
<comment type="interaction">
    <interactant intactId="EBI-739580">
        <id>Q13137</id>
    </interactant>
    <interactant intactId="EBI-749995">
        <id>P56279</id>
        <label>TCL1A</label>
    </interactant>
    <organismsDiffer>false</organismsDiffer>
    <experiments>12</experiments>
</comment>
<comment type="interaction">
    <interactant intactId="EBI-739580">
        <id>Q13137</id>
    </interactant>
    <interactant intactId="EBI-8644516">
        <id>Q9BXF9</id>
        <label>TEKT3</label>
    </interactant>
    <organismsDiffer>false</organismsDiffer>
    <experiments>5</experiments>
</comment>
<comment type="interaction">
    <interactant intactId="EBI-739580">
        <id>Q13137</id>
    </interactant>
    <interactant intactId="EBI-2802204">
        <id>Q6PIY7</id>
        <label>TENT2</label>
    </interactant>
    <organismsDiffer>false</organismsDiffer>
    <experiments>3</experiments>
</comment>
<comment type="interaction">
    <interactant intactId="EBI-739580">
        <id>Q13137</id>
    </interactant>
    <interactant intactId="EBI-717810">
        <id>Q08117</id>
        <label>TLE5</label>
    </interactant>
    <organismsDiffer>false</organismsDiffer>
    <experiments>3</experiments>
</comment>
<comment type="interaction">
    <interactant intactId="EBI-739580">
        <id>Q13137</id>
    </interactant>
    <interactant intactId="EBI-739588">
        <id>Q96S44</id>
        <label>TP53RK</label>
    </interactant>
    <organismsDiffer>false</organismsDiffer>
    <experiments>5</experiments>
</comment>
<comment type="interaction">
    <interactant intactId="EBI-739580">
        <id>Q13137</id>
    </interactant>
    <interactant intactId="EBI-10241197">
        <id>Q3SY00</id>
        <label>TSGA10IP</label>
    </interactant>
    <organismsDiffer>false</organismsDiffer>
    <experiments>3</experiments>
</comment>
<comment type="interaction">
    <interactant intactId="EBI-739580">
        <id>Q13137</id>
    </interactant>
    <interactant intactId="EBI-724045">
        <id>Q8NBM4</id>
        <label>UBAC2</label>
    </interactant>
    <organismsDiffer>false</organismsDiffer>
    <experiments>3</experiments>
</comment>
<comment type="interaction">
    <interactant intactId="EBI-739580">
        <id>Q13137</id>
    </interactant>
    <interactant intactId="EBI-1642104">
        <id>Q5U5U6</id>
        <label>UBB</label>
    </interactant>
    <organismsDiffer>false</organismsDiffer>
    <experiments>3</experiments>
</comment>
<comment type="interaction">
    <interactant intactId="EBI-739580">
        <id>Q13137</id>
    </interactant>
    <interactant intactId="EBI-745483">
        <id>Q96C32</id>
        <label>UBC</label>
    </interactant>
    <organismsDiffer>false</organismsDiffer>
    <experiments>3</experiments>
</comment>
<comment type="interaction">
    <interactant intactId="EBI-739580">
        <id>Q13137</id>
    </interactant>
    <interactant intactId="EBI-743272">
        <id>O75604</id>
        <label>USP2</label>
    </interactant>
    <organismsDiffer>false</organismsDiffer>
    <experiments>3</experiments>
</comment>
<comment type="interaction">
    <interactant intactId="EBI-739580">
        <id>Q13137</id>
    </interactant>
    <interactant intactId="EBI-355765">
        <id>P26640</id>
        <label>VARS1</label>
    </interactant>
    <organismsDiffer>false</organismsDiffer>
    <experiments>3</experiments>
</comment>
<comment type="interaction">
    <interactant intactId="EBI-739580">
        <id>Q13137</id>
    </interactant>
    <interactant intactId="EBI-2564133">
        <id>Q9P1Z0</id>
        <label>ZBTB4</label>
    </interactant>
    <organismsDiffer>false</organismsDiffer>
    <experiments>3</experiments>
</comment>
<comment type="interaction">
    <interactant intactId="EBI-739580">
        <id>Q13137</id>
    </interactant>
    <interactant intactId="EBI-714987">
        <id>Q9Y3M9</id>
        <label>ZNF337</label>
    </interactant>
    <organismsDiffer>false</organismsDiffer>
    <experiments>3</experiments>
</comment>
<comment type="interaction">
    <interactant intactId="EBI-739580">
        <id>Q13137</id>
    </interactant>
    <interactant intactId="EBI-347633">
        <id>Q9H9D4</id>
        <label>ZNF408</label>
    </interactant>
    <organismsDiffer>false</organismsDiffer>
    <experiments>4</experiments>
</comment>
<comment type="interaction">
    <interactant intactId="EBI-739580">
        <id>Q13137</id>
    </interactant>
    <interactant intactId="EBI-744257">
        <id>Q96IQ9</id>
        <label>ZNF414</label>
    </interactant>
    <organismsDiffer>false</organismsDiffer>
    <experiments>3</experiments>
</comment>
<comment type="interaction">
    <interactant intactId="EBI-739580">
        <id>Q13137</id>
    </interactant>
    <interactant intactId="EBI-10273713">
        <id>Q8TBZ8</id>
        <label>ZNF564</label>
    </interactant>
    <organismsDiffer>false</organismsDiffer>
    <experiments>3</experiments>
</comment>
<comment type="interaction">
    <interactant intactId="EBI-739580">
        <id>Q13137</id>
    </interactant>
    <interactant intactId="EBI-745520">
        <id>Q9P0T4</id>
        <label>ZNF581</label>
    </interactant>
    <organismsDiffer>false</organismsDiffer>
    <experiments>3</experiments>
</comment>
<comment type="interaction">
    <interactant intactId="EBI-739580">
        <id>Q13137</id>
    </interactant>
    <interactant intactId="EBI-11985915">
        <id>Q5T619</id>
        <label>ZNF648</label>
    </interactant>
    <organismsDiffer>false</organismsDiffer>
    <experiments>3</experiments>
</comment>
<comment type="interaction">
    <interactant intactId="EBI-739580">
        <id>Q13137</id>
    </interactant>
    <interactant intactId="EBI-16429014">
        <id>A0A0S2Z5X4</id>
        <label>ZNF688</label>
    </interactant>
    <organismsDiffer>false</organismsDiffer>
    <experiments>3</experiments>
</comment>
<comment type="interaction">
    <interactant intactId="EBI-739580">
        <id>Q13137</id>
    </interactant>
    <interactant intactId="EBI-11090299">
        <id>Q9H7X3</id>
        <label>ZNF696</label>
    </interactant>
    <organismsDiffer>false</organismsDiffer>
    <experiments>3</experiments>
</comment>
<comment type="interaction">
    <interactant intactId="EBI-739580">
        <id>Q13137</id>
    </interactant>
    <interactant intactId="EBI-10251462">
        <id>Q6NX45</id>
        <label>ZNF774</label>
    </interactant>
    <organismsDiffer>false</organismsDiffer>
    <experiments>3</experiments>
</comment>
<comment type="interaction">
    <interactant intactId="EBI-739580">
        <id>Q13137</id>
    </interactant>
    <interactant intactId="EBI-12013828">
        <id>P51504</id>
        <label>ZNF80</label>
    </interactant>
    <organismsDiffer>false</organismsDiffer>
    <experiments>3</experiments>
</comment>
<comment type="interaction">
    <interactant intactId="EBI-739580">
        <id>Q13137</id>
    </interactant>
    <interactant intactId="EBI-10175746">
        <id>B2R9Y1</id>
    </interactant>
    <organismsDiffer>false</organismsDiffer>
    <experiments>3</experiments>
</comment>
<comment type="interaction">
    <interactant intactId="EBI-739580">
        <id>Q13137</id>
    </interactant>
    <interactant intactId="EBI-747182">
        <id>Q8WU02</id>
    </interactant>
    <organismsDiffer>false</organismsDiffer>
    <experiments>3</experiments>
</comment>
<comment type="interaction">
    <interactant intactId="EBI-739580">
        <id>Q13137</id>
    </interactant>
    <interactant intactId="EBI-6863741">
        <id>PRO_0000037548</id>
        <dbReference type="UniProtKB" id="Q9WMX2"/>
    </interactant>
    <organismsDiffer>true</organismsDiffer>
    <experiments>3</experiments>
</comment>
<comment type="subcellular location">
    <subcellularLocation>
        <location evidence="4 7 18">Cytoplasm</location>
        <location evidence="4 7 18">Perinuclear region</location>
    </subcellularLocation>
    <subcellularLocation>
        <location evidence="7">Cytoplasm</location>
        <location evidence="7">Cytoskeleton</location>
    </subcellularLocation>
    <subcellularLocation>
        <location evidence="13">Cytoplasmic vesicle</location>
        <location evidence="13">Autophagosome membrane</location>
        <topology evidence="25">Peripheral membrane protein</topology>
    </subcellularLocation>
    <text evidence="4 17 18">According to PubMed:7540613, localizes to nuclear dots. According to PubMed:9230084 and PubMed:12869526, it is not a nuclear dot-associated protein but localizes predominantly in the cytoplasm with a coarse-grained distribution preferentially close to the nucleus.</text>
</comment>
<comment type="alternative products">
    <event type="alternative splicing"/>
    <isoform>
        <id>Q13137-1</id>
        <name>1</name>
        <sequence type="displayed"/>
    </isoform>
    <isoform>
        <id>Q13137-2</id>
        <name>2</name>
        <sequence type="described" ref="VSP_044728"/>
    </isoform>
    <isoform>
        <id>Q13137-3</id>
        <name>3</name>
        <sequence type="described" ref="VSP_046766"/>
    </isoform>
    <isoform>
        <id>Q13137-4</id>
        <name>4</name>
        <sequence type="described" ref="VSP_046767"/>
    </isoform>
    <isoform>
        <id>Q13137-5</id>
        <name>5</name>
        <sequence type="described" ref="VSP_047414"/>
    </isoform>
</comment>
<comment type="tissue specificity">
    <text evidence="17">Expressed in all tissues tested with highest expression in skeletal muscle and lowest in brain.</text>
</comment>
<comment type="induction">
    <text evidence="17 18">Treatment with IFNB1/IFN-beta and IFNG/IFN-gamma show an increase in number and size of CALCOCO2-specific dots and partial redistribution to the cytoplasm (PubMed:7540613). IFNG/IFN-gamma increases gene expression only slightly and IFNB does not increase expression (PubMed:9230084).</text>
</comment>
<comment type="domain">
    <text evidence="13">The MYO6-binding domain is required for autophagy-mediated degradation of infecting bacteria such as Salmonella typhimurium, but not for bacteria targeting to autophagosomes.</text>
</comment>
<comment type="domain">
    <text evidence="9 13">The CLIR (LC3C-interacting region) motif is required for interaction with MAP1LC3C, but dispensable for CALCOCO2-mediated autophagosome maturation.</text>
</comment>
<comment type="domain">
    <text evidence="13">The LIR-like motif is required for interaction with MAP1LC3A, MAP1LC3B and GABARAPL2, as well as for CALCOCO2-mediated autophagosome maturation.</text>
</comment>
<comment type="domain">
    <text evidence="10">The LGALS8-binding domain is essential for the recruitment to cytosol-exposed infecting bacteria.</text>
</comment>
<comment type="PTM">
    <text evidence="12">(Microbial infection) Cleaved by S.pyogenes SpeB protease; leading to its degradation (PubMed:24331465). Degradation by SpeB prevents autophagy, promoting to S.pyogenes intracellular replication (PubMed:24331465).</text>
</comment>
<comment type="similarity">
    <text evidence="25">Belongs to the CALCOCO family.</text>
</comment>
<accession>Q13137</accession>
<accession>B2RBT0</accession>
<accession>B4DDC4</accession>
<accession>B4DDT4</accession>
<accession>B4DP36</accession>
<accession>B4E0C0</accession>
<accession>E7ENK0</accession>
<accession>E7ETP5</accession>
<accession>E9PBE5</accession>
<accession>Q53FQ5</accession>
<accession>Q53HB5</accession>
<accession>Q6IBN9</accession>
<accession>Q9BTF7</accession>
<sequence length="446" mass="52254">MEETIKDPPTSAVLLDHCHFSQVIFNSVEKFYIPGGDVTCHYTFTQHFIPRRKDWIGIFRVGWKTTREYYTFMWVTLPIDLNNKSAKQQEVQFKAYYLPKDDEYYQFCYVDEDGVVRGASIPFQFRPENEEDILVVTTQGEVEEIEQHNKELCKENQELKDSCISLQKQNSDMQAELQKKQEELETLQSINKKLELKVKEQKDYWETELLQLKEQNQKMSSENEKMGIRVDQLQAQLSTQEKEMEKLVQGDQDKTEQLEQLKKENDHLFLSLTEQRKDQKKLEQTVEQMKQNETTAMKKQQELMDENFDLSKRLSENEIICNALQRQKERLEGENDLLKRENSRLLSYMGLDFNSLPYQVPTSDEGGARQNPGLAYGNPYSGIQESSSPSPLSIKKCPICKADDICDHTLEQQQMQPLCFNCPICDKIFPATEKQIFEDHVFCHSL</sequence>
<reference key="1">
    <citation type="journal article" date="1995" name="J. Cell Biol.">
        <title>Molecular characterization of NDP52, a novel protein of the nuclear domain 10, which is redistributed upon virus infection and interferon treatment.</title>
        <authorList>
            <person name="Korioth F."/>
            <person name="Gieffers C."/>
            <person name="Maul G.G."/>
            <person name="Frey J."/>
        </authorList>
    </citation>
    <scope>NUCLEOTIDE SEQUENCE [MRNA] (ISOFORM 1)</scope>
    <scope>SUBCELLULAR LOCATION</scope>
    <scope>TISSUE SPECIFICITY</scope>
    <scope>INDUCTION</scope>
</reference>
<reference key="2">
    <citation type="journal article" date="2004" name="Nat. Genet.">
        <title>Complete sequencing and characterization of 21,243 full-length human cDNAs.</title>
        <authorList>
            <person name="Ota T."/>
            <person name="Suzuki Y."/>
            <person name="Nishikawa T."/>
            <person name="Otsuki T."/>
            <person name="Sugiyama T."/>
            <person name="Irie R."/>
            <person name="Wakamatsu A."/>
            <person name="Hayashi K."/>
            <person name="Sato H."/>
            <person name="Nagai K."/>
            <person name="Kimura K."/>
            <person name="Makita H."/>
            <person name="Sekine M."/>
            <person name="Obayashi M."/>
            <person name="Nishi T."/>
            <person name="Shibahara T."/>
            <person name="Tanaka T."/>
            <person name="Ishii S."/>
            <person name="Yamamoto J."/>
            <person name="Saito K."/>
            <person name="Kawai Y."/>
            <person name="Isono Y."/>
            <person name="Nakamura Y."/>
            <person name="Nagahari K."/>
            <person name="Murakami K."/>
            <person name="Yasuda T."/>
            <person name="Iwayanagi T."/>
            <person name="Wagatsuma M."/>
            <person name="Shiratori A."/>
            <person name="Sudo H."/>
            <person name="Hosoiri T."/>
            <person name="Kaku Y."/>
            <person name="Kodaira H."/>
            <person name="Kondo H."/>
            <person name="Sugawara M."/>
            <person name="Takahashi M."/>
            <person name="Kanda K."/>
            <person name="Yokoi T."/>
            <person name="Furuya T."/>
            <person name="Kikkawa E."/>
            <person name="Omura Y."/>
            <person name="Abe K."/>
            <person name="Kamihara K."/>
            <person name="Katsuta N."/>
            <person name="Sato K."/>
            <person name="Tanikawa M."/>
            <person name="Yamazaki M."/>
            <person name="Ninomiya K."/>
            <person name="Ishibashi T."/>
            <person name="Yamashita H."/>
            <person name="Murakawa K."/>
            <person name="Fujimori K."/>
            <person name="Tanai H."/>
            <person name="Kimata M."/>
            <person name="Watanabe M."/>
            <person name="Hiraoka S."/>
            <person name="Chiba Y."/>
            <person name="Ishida S."/>
            <person name="Ono Y."/>
            <person name="Takiguchi S."/>
            <person name="Watanabe S."/>
            <person name="Yosida M."/>
            <person name="Hotuta T."/>
            <person name="Kusano J."/>
            <person name="Kanehori K."/>
            <person name="Takahashi-Fujii A."/>
            <person name="Hara H."/>
            <person name="Tanase T.-O."/>
            <person name="Nomura Y."/>
            <person name="Togiya S."/>
            <person name="Komai F."/>
            <person name="Hara R."/>
            <person name="Takeuchi K."/>
            <person name="Arita M."/>
            <person name="Imose N."/>
            <person name="Musashino K."/>
            <person name="Yuuki H."/>
            <person name="Oshima A."/>
            <person name="Sasaki N."/>
            <person name="Aotsuka S."/>
            <person name="Yoshikawa Y."/>
            <person name="Matsunawa H."/>
            <person name="Ichihara T."/>
            <person name="Shiohata N."/>
            <person name="Sano S."/>
            <person name="Moriya S."/>
            <person name="Momiyama H."/>
            <person name="Satoh N."/>
            <person name="Takami S."/>
            <person name="Terashima Y."/>
            <person name="Suzuki O."/>
            <person name="Nakagawa S."/>
            <person name="Senoh A."/>
            <person name="Mizoguchi H."/>
            <person name="Goto Y."/>
            <person name="Shimizu F."/>
            <person name="Wakebe H."/>
            <person name="Hishigaki H."/>
            <person name="Watanabe T."/>
            <person name="Sugiyama A."/>
            <person name="Takemoto M."/>
            <person name="Kawakami B."/>
            <person name="Yamazaki M."/>
            <person name="Watanabe K."/>
            <person name="Kumagai A."/>
            <person name="Itakura S."/>
            <person name="Fukuzumi Y."/>
            <person name="Fujimori Y."/>
            <person name="Komiyama M."/>
            <person name="Tashiro H."/>
            <person name="Tanigami A."/>
            <person name="Fujiwara T."/>
            <person name="Ono T."/>
            <person name="Yamada K."/>
            <person name="Fujii Y."/>
            <person name="Ozaki K."/>
            <person name="Hirao M."/>
            <person name="Ohmori Y."/>
            <person name="Kawabata A."/>
            <person name="Hikiji T."/>
            <person name="Kobatake N."/>
            <person name="Inagaki H."/>
            <person name="Ikema Y."/>
            <person name="Okamoto S."/>
            <person name="Okitani R."/>
            <person name="Kawakami T."/>
            <person name="Noguchi S."/>
            <person name="Itoh T."/>
            <person name="Shigeta K."/>
            <person name="Senba T."/>
            <person name="Matsumura K."/>
            <person name="Nakajima Y."/>
            <person name="Mizuno T."/>
            <person name="Morinaga M."/>
            <person name="Sasaki M."/>
            <person name="Togashi T."/>
            <person name="Oyama M."/>
            <person name="Hata H."/>
            <person name="Watanabe M."/>
            <person name="Komatsu T."/>
            <person name="Mizushima-Sugano J."/>
            <person name="Satoh T."/>
            <person name="Shirai Y."/>
            <person name="Takahashi Y."/>
            <person name="Nakagawa K."/>
            <person name="Okumura K."/>
            <person name="Nagase T."/>
            <person name="Nomura N."/>
            <person name="Kikuchi H."/>
            <person name="Masuho Y."/>
            <person name="Yamashita R."/>
            <person name="Nakai K."/>
            <person name="Yada T."/>
            <person name="Nakamura Y."/>
            <person name="Ohara O."/>
            <person name="Isogai T."/>
            <person name="Sugano S."/>
        </authorList>
    </citation>
    <scope>NUCLEOTIDE SEQUENCE [LARGE SCALE MRNA] (ISOFORMS 1; 2; 3; 4 AND 5)</scope>
    <scope>VARIANTS GLU-140; ALA-248 AND ALA-389</scope>
    <source>
        <tissue>Mammary gland</tissue>
        <tissue>Neuroblastoma</tissue>
        <tissue>Teratocarcinoma</tissue>
        <tissue>Thymus</tissue>
    </source>
</reference>
<reference key="3">
    <citation type="submission" date="2004-06" db="EMBL/GenBank/DDBJ databases">
        <title>Cloning of human full open reading frames in Gateway(TM) system entry vector (pDONR201).</title>
        <authorList>
            <person name="Ebert L."/>
            <person name="Schick M."/>
            <person name="Neubert P."/>
            <person name="Schatten R."/>
            <person name="Henze S."/>
            <person name="Korn B."/>
        </authorList>
    </citation>
    <scope>NUCLEOTIDE SEQUENCE [LARGE SCALE MRNA] (ISOFORM 1)</scope>
    <scope>VARIANT ALA-248</scope>
</reference>
<reference key="4">
    <citation type="submission" date="2005-04" db="EMBL/GenBank/DDBJ databases">
        <authorList>
            <person name="Suzuki Y."/>
            <person name="Sugano S."/>
            <person name="Totoki Y."/>
            <person name="Toyoda A."/>
            <person name="Takeda T."/>
            <person name="Sakaki Y."/>
            <person name="Tanaka A."/>
            <person name="Yokoyama S."/>
        </authorList>
    </citation>
    <scope>NUCLEOTIDE SEQUENCE [LARGE SCALE MRNA] (ISOFORM 1)</scope>
    <scope>VARIANT ALA-389</scope>
    <source>
        <tissue>Brain</tissue>
        <tissue>Gastric mucosa</tissue>
    </source>
</reference>
<reference key="5">
    <citation type="journal article" date="2006" name="Nature">
        <title>DNA sequence of human chromosome 17 and analysis of rearrangement in the human lineage.</title>
        <authorList>
            <person name="Zody M.C."/>
            <person name="Garber M."/>
            <person name="Adams D.J."/>
            <person name="Sharpe T."/>
            <person name="Harrow J."/>
            <person name="Lupski J.R."/>
            <person name="Nicholson C."/>
            <person name="Searle S.M."/>
            <person name="Wilming L."/>
            <person name="Young S.K."/>
            <person name="Abouelleil A."/>
            <person name="Allen N.R."/>
            <person name="Bi W."/>
            <person name="Bloom T."/>
            <person name="Borowsky M.L."/>
            <person name="Bugalter B.E."/>
            <person name="Butler J."/>
            <person name="Chang J.L."/>
            <person name="Chen C.-K."/>
            <person name="Cook A."/>
            <person name="Corum B."/>
            <person name="Cuomo C.A."/>
            <person name="de Jong P.J."/>
            <person name="DeCaprio D."/>
            <person name="Dewar K."/>
            <person name="FitzGerald M."/>
            <person name="Gilbert J."/>
            <person name="Gibson R."/>
            <person name="Gnerre S."/>
            <person name="Goldstein S."/>
            <person name="Grafham D.V."/>
            <person name="Grocock R."/>
            <person name="Hafez N."/>
            <person name="Hagopian D.S."/>
            <person name="Hart E."/>
            <person name="Norman C.H."/>
            <person name="Humphray S."/>
            <person name="Jaffe D.B."/>
            <person name="Jones M."/>
            <person name="Kamal M."/>
            <person name="Khodiyar V.K."/>
            <person name="LaButti K."/>
            <person name="Laird G."/>
            <person name="Lehoczky J."/>
            <person name="Liu X."/>
            <person name="Lokyitsang T."/>
            <person name="Loveland J."/>
            <person name="Lui A."/>
            <person name="Macdonald P."/>
            <person name="Major J.E."/>
            <person name="Matthews L."/>
            <person name="Mauceli E."/>
            <person name="McCarroll S.A."/>
            <person name="Mihalev A.H."/>
            <person name="Mudge J."/>
            <person name="Nguyen C."/>
            <person name="Nicol R."/>
            <person name="O'Leary S.B."/>
            <person name="Osoegawa K."/>
            <person name="Schwartz D.C."/>
            <person name="Shaw-Smith C."/>
            <person name="Stankiewicz P."/>
            <person name="Steward C."/>
            <person name="Swarbreck D."/>
            <person name="Venkataraman V."/>
            <person name="Whittaker C.A."/>
            <person name="Yang X."/>
            <person name="Zimmer A.R."/>
            <person name="Bradley A."/>
            <person name="Hubbard T."/>
            <person name="Birren B.W."/>
            <person name="Rogers J."/>
            <person name="Lander E.S."/>
            <person name="Nusbaum C."/>
        </authorList>
    </citation>
    <scope>NUCLEOTIDE SEQUENCE [LARGE SCALE GENOMIC DNA]</scope>
</reference>
<reference key="6">
    <citation type="submission" date="2005-07" db="EMBL/GenBank/DDBJ databases">
        <authorList>
            <person name="Mural R.J."/>
            <person name="Istrail S."/>
            <person name="Sutton G.G."/>
            <person name="Florea L."/>
            <person name="Halpern A.L."/>
            <person name="Mobarry C.M."/>
            <person name="Lippert R."/>
            <person name="Walenz B."/>
            <person name="Shatkay H."/>
            <person name="Dew I."/>
            <person name="Miller J.R."/>
            <person name="Flanigan M.J."/>
            <person name="Edwards N.J."/>
            <person name="Bolanos R."/>
            <person name="Fasulo D."/>
            <person name="Halldorsson B.V."/>
            <person name="Hannenhalli S."/>
            <person name="Turner R."/>
            <person name="Yooseph S."/>
            <person name="Lu F."/>
            <person name="Nusskern D.R."/>
            <person name="Shue B.C."/>
            <person name="Zheng X.H."/>
            <person name="Zhong F."/>
            <person name="Delcher A.L."/>
            <person name="Huson D.H."/>
            <person name="Kravitz S.A."/>
            <person name="Mouchard L."/>
            <person name="Reinert K."/>
            <person name="Remington K.A."/>
            <person name="Clark A.G."/>
            <person name="Waterman M.S."/>
            <person name="Eichler E.E."/>
            <person name="Adams M.D."/>
            <person name="Hunkapiller M.W."/>
            <person name="Myers E.W."/>
            <person name="Venter J.C."/>
        </authorList>
    </citation>
    <scope>NUCLEOTIDE SEQUENCE [LARGE SCALE GENOMIC DNA]</scope>
    <scope>VARIANT ALA-389</scope>
</reference>
<reference key="7">
    <citation type="journal article" date="2004" name="Genome Res.">
        <title>The status, quality, and expansion of the NIH full-length cDNA project: the Mammalian Gene Collection (MGC).</title>
        <authorList>
            <consortium name="The MGC Project Team"/>
        </authorList>
    </citation>
    <scope>NUCLEOTIDE SEQUENCE [LARGE SCALE MRNA] (ISOFORM 1)</scope>
    <scope>VARIANT ALA-273</scope>
    <source>
        <tissue>Kidney</tissue>
        <tissue>Skin</tissue>
    </source>
</reference>
<reference key="8">
    <citation type="journal article" date="1997" name="J. Cell Biol.">
        <title>Cellular localization, expression, and structure of the nuclear dot protein 52.</title>
        <authorList>
            <person name="Sternsdorf T."/>
            <person name="Jensen K."/>
            <person name="Zuchner D."/>
            <person name="Will H."/>
        </authorList>
    </citation>
    <scope>SUBCELLULAR LOCATION</scope>
    <scope>INDUCTION</scope>
</reference>
<reference key="9">
    <citation type="journal article" date="2003" name="J. Biochem.">
        <title>HCC-associated protein HCAP1, a variant of GEMIN4, interacts with zinc-finger proteins.</title>
        <authorList>
            <person name="Di Y."/>
            <person name="Li J."/>
            <person name="Zhang Y."/>
            <person name="He X."/>
            <person name="Lu H."/>
            <person name="Xu D."/>
            <person name="Ling J."/>
            <person name="Huo K."/>
            <person name="Wan D."/>
            <person name="Li Y.Y."/>
            <person name="Gu J."/>
        </authorList>
    </citation>
    <scope>INTERACTION WITH GEMIN4</scope>
    <scope>SUBCELLULAR LOCATION</scope>
</reference>
<reference key="10">
    <citation type="journal article" date="2007" name="J. Cell Sci.">
        <title>T6BP and NDP52 are myosin VI binding partners with potential roles in cytokine signalling and cell adhesion.</title>
        <authorList>
            <person name="Morriswood B."/>
            <person name="Ryzhakov G."/>
            <person name="Puri C."/>
            <person name="Arden S.D."/>
            <person name="Roberts R."/>
            <person name="Dendrou C."/>
            <person name="Kendrick-Jones J."/>
            <person name="Buss F."/>
        </authorList>
    </citation>
    <scope>FUNCTION</scope>
    <scope>INTERACTION WITH TAX1BP1 AND MYO6</scope>
    <scope>MUTAGENESIS OF CYS-400 AND CYS-425</scope>
    <scope>SUBCELLULAR LOCATION</scope>
</reference>
<reference key="11">
    <citation type="journal article" date="2013" name="Cell Host Microbe">
        <title>The globally disseminated M1T1 clone of group A Streptococcus evades autophagy for intracellular replication.</title>
        <authorList>
            <person name="Barnett T.C."/>
            <person name="Liebl D."/>
            <person name="Seymour L.M."/>
            <person name="Gillen C.M."/>
            <person name="Lim J.Y."/>
            <person name="Larock C.N."/>
            <person name="Davies M.R."/>
            <person name="Schulz B.L."/>
            <person name="Nizet V."/>
            <person name="Teasdale R.D."/>
            <person name="Walker M.J."/>
        </authorList>
    </citation>
    <scope>PROTEOLYTIC CLEAVAGE (MICROBIAL INFECTION)</scope>
</reference>
<reference key="12">
    <citation type="journal article" date="2012" name="Nature">
        <title>Galectin 8 targets damaged vesicles for autophagy to defend cells against bacterial invasion.</title>
        <authorList>
            <person name="Thurston T.L."/>
            <person name="Wandel M.P."/>
            <person name="von Muhlinen N."/>
            <person name="Foeglein A."/>
            <person name="Randow F."/>
        </authorList>
    </citation>
    <scope>FUNCTION</scope>
    <scope>INTERACTION WITH LGALS8</scope>
</reference>
<reference key="13">
    <citation type="journal article" date="2013" name="J. Proteome Res.">
        <title>Toward a comprehensive characterization of a human cancer cell phosphoproteome.</title>
        <authorList>
            <person name="Zhou H."/>
            <person name="Di Palma S."/>
            <person name="Preisinger C."/>
            <person name="Peng M."/>
            <person name="Polat A.N."/>
            <person name="Heck A.J."/>
            <person name="Mohammed S."/>
        </authorList>
    </citation>
    <scope>PHOSPHORYLATION [LARGE SCALE ANALYSIS] AT SER-445</scope>
    <scope>IDENTIFICATION BY MASS SPECTROMETRY [LARGE SCALE ANALYSIS]</scope>
    <source>
        <tissue>Erythroleukemia</tissue>
    </source>
</reference>
<reference key="14">
    <citation type="journal article" date="2014" name="J. Proteomics">
        <title>An enzyme assisted RP-RPLC approach for in-depth analysis of human liver phosphoproteome.</title>
        <authorList>
            <person name="Bian Y."/>
            <person name="Song C."/>
            <person name="Cheng K."/>
            <person name="Dong M."/>
            <person name="Wang F."/>
            <person name="Huang J."/>
            <person name="Sun D."/>
            <person name="Wang L."/>
            <person name="Ye M."/>
            <person name="Zou H."/>
        </authorList>
    </citation>
    <scope>IDENTIFICATION BY MASS SPECTROMETRY [LARGE SCALE ANALYSIS]</scope>
    <source>
        <tissue>Liver</tissue>
    </source>
</reference>
<reference key="15">
    <citation type="journal article" date="2015" name="Cell Host Microbe">
        <title>Autophagy receptor NDP52 regulates pathogen-containing autophagosome maturation.</title>
        <authorList>
            <person name="Verlhac P."/>
            <person name="Gregoire I.P."/>
            <person name="Azocar O."/>
            <person name="Petkova D.S."/>
            <person name="Baguet J."/>
            <person name="Viret C."/>
            <person name="Faure M."/>
        </authorList>
    </citation>
    <scope>FUNCTION</scope>
    <scope>DOMAIN</scope>
    <scope>MUTAGENESIS OF CYS-425</scope>
    <scope>INTERACTION WITH MAP1LC3A; MAP1LC3C; MAP1LC3B; GABARAP; GABARAPL1; GABARAPL2 AND LGALS8</scope>
    <scope>SUBCELLULAR LOCATION</scope>
</reference>
<reference key="16">
    <citation type="journal article" date="2019" name="Nat. Commun.">
        <title>Structure of Myosin VI/Tom1 complex reveals a cargo recognition mode of Myosin VI for tethering.</title>
        <authorList>
            <person name="Hu S."/>
            <person name="Guo Y."/>
            <person name="Wang Y."/>
            <person name="Li Y."/>
            <person name="Fu T."/>
            <person name="Zhou Z."/>
            <person name="Wang Y."/>
            <person name="Liu J."/>
            <person name="Pan L."/>
        </authorList>
    </citation>
    <scope>INTERACTION WITH MYO6 AND TOM1</scope>
</reference>
<reference key="17">
    <citation type="journal article" date="2019" name="Viruses">
        <title>Autophagy Promotes Infectious Particle Production of Mopeia and Lassa Viruses.</title>
        <authorList>
            <person name="Baillet N."/>
            <person name="Krieger S."/>
            <person name="Journeaux A."/>
            <person name="Caro V."/>
            <person name="Tangy F."/>
            <person name="Vidalain P.O."/>
            <person name="Baize S."/>
        </authorList>
    </citation>
    <scope>INTERACTION WITH LASSA VIRUS AND MOPEIA VIRUS PROTEIN Z (MICROBIAL INFECTION)</scope>
</reference>
<reference key="18">
    <citation type="journal article" date="2012" name="Mol. Cell">
        <title>LC3C, bound selectively by a noncanonical LIR motif in NDP52, is required for antibacterial autophagy.</title>
        <authorList>
            <person name="von Muhlinen N."/>
            <person name="Akutsu M."/>
            <person name="Ravenhill B.J."/>
            <person name="Foeglein A."/>
            <person name="Bloor S."/>
            <person name="Rutherford T.J."/>
            <person name="Freund S.M."/>
            <person name="Komander D."/>
            <person name="Randow F."/>
        </authorList>
    </citation>
    <scope>X-RAY CRYSTALLOGRAPHY (1.35 ANGSTROMS) OF 21-141 IN COMPLEX WITH MAP1LC3C</scope>
    <scope>FUNCTION</scope>
    <scope>DOMAIN</scope>
    <scope>INTERACTION WITH MAP1LC3C</scope>
    <scope>MUTAGENESIS OF VAL-136</scope>
</reference>
<reference key="19">
    <citation type="journal article" date="2013" name="Nat. Commun.">
        <title>Structural basis for recognition of autophagic receptor NDP52 by the sugar receptor galectin-8.</title>
        <authorList>
            <person name="Kim B.W."/>
            <person name="Hong S.B."/>
            <person name="Kim J.H."/>
            <person name="Kwon do H."/>
            <person name="Song H.K."/>
        </authorList>
    </citation>
    <scope>X-RAY CRYSTALLOGRAPHY (2.55 ANGSTROMS) OF 372-385 IN COMPLEX WITH LGALS8</scope>
    <scope>SUBUNIT</scope>
    <scope>DOMAIN</scope>
    <scope>MUTAGENESIS OF LEU-374 AND TYR-380</scope>
</reference>
<reference key="20">
    <citation type="journal article" date="2013" name="Sci. Signal.">
        <title>Sterical hindrance promotes selectivity of the autophagy cargo receptor NDP52 for the danger receptor galectin-8 in antibacterial autophagy.</title>
        <authorList>
            <person name="Li S."/>
            <person name="Wandel M.P."/>
            <person name="Li F."/>
            <person name="Liu Z."/>
            <person name="He C."/>
            <person name="Wu J."/>
            <person name="Shi Y."/>
            <person name="Randow F."/>
        </authorList>
    </citation>
    <scope>X-RAY CRYSTALLOGRAPHY (2.02 ANGSTROMS) OF 368-381 IN COMPLEX WITH LGALS8</scope>
    <scope>DOMAIN</scope>
    <scope>MUTAGENESIS OF LEU-374; TYR-376; ASN-378 AND TYR-380</scope>
    <scope>INTERACTION WITH LGALS8</scope>
    <scope>FUNCTION</scope>
</reference>
<reference evidence="28 29" key="21">
    <citation type="journal article" date="2018" name="Proc. Natl. Acad. Sci. U.S.A.">
        <title>Mechanistic insights into the interactions of NAP1 with the SKICH domains of NDP52 and TAX1BP1.</title>
        <authorList>
            <person name="Fu T."/>
            <person name="Liu J."/>
            <person name="Wang Y."/>
            <person name="Xie X."/>
            <person name="Hu S."/>
            <person name="Pan L."/>
        </authorList>
    </citation>
    <scope>X-RAY CRYSTALLOGRAPHY (2.02 ANGSTROMS) OF 10-126</scope>
    <scope>INTERACTION WITH AZI2</scope>
</reference>